<comment type="function">
    <text evidence="6 10 14 15 16 17">As a component of the GATOR1 complex functions as an inhibitor of the amino acid-sensing branch of the mTORC1 pathway (PubMed:23723238, PubMed:25457612, PubMed:29590090, PubMed:29769719, PubMed:31548394, PubMed:35338845). In response to amino acid depletion, the GATOR1 complex has GTPase activating protein (GAP) activity and strongly increases GTP hydrolysis by RagA/RRAGA (or RagB/RRAGB) within heterodimeric Rag complexes, thereby turning them into their inactive GDP-bound form, releasing mTORC1 from lysosomal surface and inhibiting mTORC1 signaling (PubMed:23723238, PubMed:25457612, PubMed:29590090, PubMed:29769719, PubMed:35338845). In the presence of abundant amino acids, the GATOR1 complex is negatively regulated by GATOR2, the other GATOR subcomplex, in this amino acid-sensing branch of the TORC1 pathway (PubMed:23723238, PubMed:25457612, PubMed:29769719). Within the GATOR1 complex, DEPDC5 mediates direct interaction with the nucleotide-binding pocket of small GTPases Rag (RagA/RRAGA, RagB/RRAGB, RagC/RRAGC and/or RagD/RRAGD) and coordinates their nucleotide loading states by promoting RagA/RRAGA or RagB/RRAGB into their GDP-binding state and RagC/RRAGC or RagD/RRAGD into their GTP-binding state (PubMed:29590090, PubMed:35338845). However, it does not execute the GAP activity, which is mediated by NPRL2 (PubMed:29590090).</text>
</comment>
<comment type="subunit">
    <text evidence="6 9 14 17">Within the GATOR complex, component of the GATOR1 subcomplex, made of DEPDC5, NPRL2 and NPRL3 (PubMed:23723238, PubMed:25366275, PubMed:29590090, PubMed:35338845). GATOR1 mediates the strong interaction of the GATOR complex with small GTPases Rag (RagA/RRAGA, RagB/RRAGB, RagC/RRAGC and/or RagD/RRAGD) heterodimers (PubMed:23723238, PubMed:29590090). Interacts with SAMTOR; interaction is direct and takes place in presence of methionine, leading to inhibit the activity of the GATOR1 complex (PubMed:29590090).</text>
</comment>
<comment type="interaction">
    <interactant intactId="EBI-12366971">
        <id>O75140-2</id>
    </interactant>
    <interactant intactId="EBI-356673">
        <id>P49368</id>
        <label>CCT3</label>
    </interactant>
    <organismsDiffer>false</organismsDiffer>
    <experiments>3</experiments>
</comment>
<comment type="interaction">
    <interactant intactId="EBI-12366971">
        <id>O75140-2</id>
    </interactant>
    <interactant intactId="EBI-12082590">
        <id>Q6W0C5</id>
        <label>DPPA3</label>
    </interactant>
    <organismsDiffer>false</organismsDiffer>
    <experiments>3</experiments>
</comment>
<comment type="interaction">
    <interactant intactId="EBI-12366971">
        <id>O75140-2</id>
    </interactant>
    <interactant intactId="EBI-78203">
        <id>Q13257</id>
        <label>MAD2L1</label>
    </interactant>
    <organismsDiffer>false</organismsDiffer>
    <experiments>3</experiments>
</comment>
<comment type="interaction">
    <interactant intactId="EBI-12366971">
        <id>O75140-2</id>
    </interactant>
    <interactant intactId="EBI-77889">
        <id>Q9UI95</id>
        <label>MAD2L2</label>
    </interactant>
    <organismsDiffer>false</organismsDiffer>
    <experiments>3</experiments>
</comment>
<comment type="interaction">
    <interactant intactId="EBI-12366971">
        <id>O75140-2</id>
    </interactant>
    <interactant intactId="EBI-16439278">
        <id>Q6FHY5</id>
        <label>MEOX2</label>
    </interactant>
    <organismsDiffer>false</organismsDiffer>
    <experiments>3</experiments>
</comment>
<comment type="interaction">
    <interactant intactId="EBI-12366971">
        <id>O75140-2</id>
    </interactant>
    <interactant intactId="EBI-744593">
        <id>Q96QG7</id>
        <label>MTMR9</label>
    </interactant>
    <organismsDiffer>false</organismsDiffer>
    <experiments>3</experiments>
</comment>
<comment type="interaction">
    <interactant intactId="EBI-12366971">
        <id>O75140-2</id>
    </interactant>
    <interactant intactId="EBI-745392">
        <id>Q9BSW7</id>
        <label>SYT17</label>
    </interactant>
    <organismsDiffer>false</organismsDiffer>
    <experiments>3</experiments>
</comment>
<comment type="interaction">
    <interactant intactId="EBI-12366971">
        <id>O75140-2</id>
    </interactant>
    <interactant intactId="EBI-743272">
        <id>O75604</id>
        <label>USP2</label>
    </interactant>
    <organismsDiffer>false</organismsDiffer>
    <experiments>3</experiments>
</comment>
<comment type="subcellular location">
    <subcellularLocation>
        <location evidence="13">Lysosome membrane</location>
    </subcellularLocation>
    <subcellularLocation>
        <location evidence="1">Cytoplasm</location>
        <location evidence="1">Cytosol</location>
    </subcellularLocation>
    <subcellularLocation>
        <location evidence="1">Cytoplasm</location>
        <location evidence="1">Perinuclear region</location>
    </subcellularLocation>
    <text evidence="13">Localization to lysosomes is mediated by the KICSTOR complex and is amino acid-independent.</text>
</comment>
<comment type="alternative products">
    <event type="alternative splicing"/>
    <isoform>
        <id>O75140-10</id>
        <name>10</name>
        <sequence type="displayed"/>
    </isoform>
    <isoform>
        <id>O75140-2</id>
        <name>2</name>
        <sequence type="described" ref="VSP_014933 VSP_014934"/>
    </isoform>
    <isoform>
        <id>O75140-4</id>
        <name>4</name>
        <sequence type="described" ref="VSP_014938"/>
    </isoform>
    <isoform>
        <id>O75140-5</id>
        <name>5</name>
        <sequence type="described" ref="VSP_014941"/>
    </isoform>
    <isoform>
        <id>O75140-6</id>
        <name>6</name>
        <sequence type="described" ref="VSP_014936 VSP_014939 VSP_014940"/>
    </isoform>
    <isoform>
        <id>O75140-8</id>
        <name>8</name>
        <sequence type="described" ref="VSP_014936 VSP_014938"/>
    </isoform>
    <isoform>
        <id>O75140-9</id>
        <name>9</name>
        <sequence type="described" ref="VSP_014937"/>
    </isoform>
    <isoform>
        <id>O75140-1</id>
        <name>1</name>
        <sequence type="described" ref="VSP_014937 VSP_014938"/>
    </isoform>
</comment>
<comment type="tissue specificity">
    <text evidence="5">Expressed in developing and adult brain.</text>
</comment>
<comment type="domain">
    <text evidence="15">The DEP domain mediates the interaction with KLHL22.</text>
</comment>
<comment type="PTM">
    <text evidence="16">Phosphorylation at Ser-1002 and Ser-1530 by AKT1 and PIM1 inhibit the activity of DEPDC5, releasing inhibition of the mTORC1 pathway.</text>
</comment>
<comment type="PTM">
    <text evidence="15">Ubiquitinated (PubMed:29769719). Amino acid-induced 'Lys-48'-linked polyubiquitination of DEPDC5 by the BCR(KLHL22) ubiquitin ligase complex leads to DEPDC5 proteasomal degradation and inhibition of the GATOR1 complex (PubMed:29769719). Ubiquitination may occur at multiple lysines (PubMed:29769719).</text>
</comment>
<comment type="disease" evidence="4 5 7 8 9 11 12">
    <disease id="DI-03794">
        <name>Epilepsy, familial focal, with variable foci 1</name>
        <acronym>FFEVF1</acronym>
        <description>An autosomal dominant form of epilepsy characterized by focal seizures arising from different cortical regions in different family members. Many patients have an aura and show automatisms during the seizures, whereas others may have nocturnal seizures. There is often secondary generalization. Some patients show abnormal interictal EEG, and some patients may have intellectual disability or autism spectrum disorders. Seizure onset usually occurs in the first or second decades, although later onset has been reported, and there is phenotypic variability within families. Penetrance of the disorder is incomplete.</description>
        <dbReference type="MIM" id="604364"/>
    </disease>
    <text>The disease is caused by variants affecting the gene represented in this entry.</text>
</comment>
<comment type="disease" evidence="18">
    <disease id="DI-06760">
        <name>Developmental and epileptic encephalopathy 111</name>
        <acronym>DEE111</acronym>
        <description>A form of epileptic encephalopathy, a heterogeneous group of early-onset epilepsies characterized by refractory seizures, neurodevelopmental impairment, and poor prognosis. Development is normal prior to seizure onset, after which cognitive and motor delays become apparent. DEE111 is an autosomal recessive form characterized by the onset of seizures in the first days, months, or years of life. Brain imaging shows frontal, parietal, and perisylvian polymicrogyria, dysmorphic basal ganglia and corpus callosum, and hypoplastic pons. Death in early childhood may occur.</description>
        <dbReference type="MIM" id="620504"/>
    </disease>
    <text>The disease is caused by variants affecting the gene represented in this entry.</text>
</comment>
<comment type="disease">
    <text evidence="6">Inactivating mutations and truncating deletions in the genes encoding GATOR1 proteins, including DEPDC5, are detected in glioblastoma and ovarian tumors and are associated with loss of heterozygosity events. Inactivation of GATOR1 proteins promotes constitutive localization of mTORC1 to the lysosomal membrane and blocks mTORC1 inactivation following amino acid withdrawal (PubMed:23723238).</text>
</comment>
<comment type="miscellaneous">
    <molecule>Isoform 6</molecule>
    <text evidence="25">May be produced at very low levels due to a premature stop codon in the mRNA, leading to nonsense-mediated mRNA decay.</text>
</comment>
<comment type="similarity">
    <text evidence="25">Belongs to the IML1 family.</text>
</comment>
<comment type="sequence caution" evidence="25">
    <conflict type="erroneous initiation">
        <sequence resource="EMBL-CDS" id="BAA31620"/>
    </conflict>
    <text>Extended N-terminus.</text>
</comment>
<comment type="sequence caution" evidence="25">
    <conflict type="miscellaneous discrepancy">
        <sequence resource="EMBL-CDS" id="CAG27890"/>
    </conflict>
    <text>Aberrant splicing.</text>
</comment>
<comment type="sequence caution" evidence="25">
    <conflict type="erroneous initiation">
        <sequence resource="EMBL-CDS" id="CAH18159"/>
    </conflict>
    <text>Truncated N-terminus.</text>
</comment>
<name>DEPD5_HUMAN</name>
<organism>
    <name type="scientific">Homo sapiens</name>
    <name type="common">Human</name>
    <dbReference type="NCBI Taxonomy" id="9606"/>
    <lineage>
        <taxon>Eukaryota</taxon>
        <taxon>Metazoa</taxon>
        <taxon>Chordata</taxon>
        <taxon>Craniata</taxon>
        <taxon>Vertebrata</taxon>
        <taxon>Euteleostomi</taxon>
        <taxon>Mammalia</taxon>
        <taxon>Eutheria</taxon>
        <taxon>Euarchontoglires</taxon>
        <taxon>Primates</taxon>
        <taxon>Haplorrhini</taxon>
        <taxon>Catarrhini</taxon>
        <taxon>Hominidae</taxon>
        <taxon>Homo</taxon>
    </lineage>
</organism>
<accession>O75140</accession>
<accession>A6H8V6</accession>
<accession>A8MPX9</accession>
<accession>B4DH93</accession>
<accession>B9EGN9</accession>
<accession>Q5K3V5</accession>
<accession>Q5THY9</accession>
<accession>Q5THZ0</accession>
<accession>Q5THZ1</accession>
<accession>Q5THZ3</accession>
<accession>Q68DR1</accession>
<accession>Q6MZX3</accession>
<accession>Q6PEZ1</accession>
<accession>Q9UGV8</accession>
<accession>Q9UH13</accession>
<evidence type="ECO:0000250" key="1">
    <source>
        <dbReference type="UniProtKB" id="P61460"/>
    </source>
</evidence>
<evidence type="ECO:0000255" key="2">
    <source>
        <dbReference type="PROSITE-ProRule" id="PRU00066"/>
    </source>
</evidence>
<evidence type="ECO:0000256" key="3">
    <source>
        <dbReference type="SAM" id="MobiDB-lite"/>
    </source>
</evidence>
<evidence type="ECO:0000269" key="4">
    <source>
    </source>
</evidence>
<evidence type="ECO:0000269" key="5">
    <source>
    </source>
</evidence>
<evidence type="ECO:0000269" key="6">
    <source>
    </source>
</evidence>
<evidence type="ECO:0000269" key="7">
    <source>
    </source>
</evidence>
<evidence type="ECO:0000269" key="8">
    <source>
    </source>
</evidence>
<evidence type="ECO:0000269" key="9">
    <source>
    </source>
</evidence>
<evidence type="ECO:0000269" key="10">
    <source>
    </source>
</evidence>
<evidence type="ECO:0000269" key="11">
    <source>
    </source>
</evidence>
<evidence type="ECO:0000269" key="12">
    <source>
    </source>
</evidence>
<evidence type="ECO:0000269" key="13">
    <source>
    </source>
</evidence>
<evidence type="ECO:0000269" key="14">
    <source>
    </source>
</evidence>
<evidence type="ECO:0000269" key="15">
    <source>
    </source>
</evidence>
<evidence type="ECO:0000269" key="16">
    <source>
    </source>
</evidence>
<evidence type="ECO:0000269" key="17">
    <source>
    </source>
</evidence>
<evidence type="ECO:0000269" key="18">
    <source>
    </source>
</evidence>
<evidence type="ECO:0000303" key="19">
    <source>
    </source>
</evidence>
<evidence type="ECO:0000303" key="20">
    <source>
    </source>
</evidence>
<evidence type="ECO:0000303" key="21">
    <source>
    </source>
</evidence>
<evidence type="ECO:0000303" key="22">
    <source>
    </source>
</evidence>
<evidence type="ECO:0000303" key="23">
    <source>
    </source>
</evidence>
<evidence type="ECO:0000303" key="24">
    <source>
    </source>
</evidence>
<evidence type="ECO:0000305" key="25"/>
<evidence type="ECO:0000312" key="26">
    <source>
        <dbReference type="HGNC" id="HGNC:18423"/>
    </source>
</evidence>
<evidence type="ECO:0007744" key="27">
    <source>
        <dbReference type="PDB" id="6CES"/>
    </source>
</evidence>
<evidence type="ECO:0007744" key="28">
    <source>
        <dbReference type="PDB" id="6CET"/>
    </source>
</evidence>
<evidence type="ECO:0007744" key="29">
    <source>
        <dbReference type="PDB" id="7T3A"/>
    </source>
</evidence>
<evidence type="ECO:0007744" key="30">
    <source>
        <dbReference type="PDB" id="7T3B"/>
    </source>
</evidence>
<evidence type="ECO:0007744" key="31">
    <source>
        <dbReference type="PDB" id="7T3C"/>
    </source>
</evidence>
<evidence type="ECO:0007744" key="32">
    <source>
    </source>
</evidence>
<evidence type="ECO:0007829" key="33">
    <source>
        <dbReference type="PDB" id="8FW5"/>
    </source>
</evidence>
<protein>
    <recommendedName>
        <fullName evidence="25">GATOR1 complex protein DEPDC5</fullName>
    </recommendedName>
    <alternativeName>
        <fullName evidence="26">DEP domain-containing protein 5</fullName>
    </alternativeName>
</protein>
<gene>
    <name evidence="23 26" type="primary">DEPDC5</name>
    <name evidence="24" type="synonym">KIAA0645</name>
</gene>
<dbReference type="EMBL" id="AJ698950">
    <property type="protein sequence ID" value="CAG27889.1"/>
    <property type="molecule type" value="mRNA"/>
</dbReference>
<dbReference type="EMBL" id="AJ698951">
    <property type="protein sequence ID" value="CAG27890.1"/>
    <property type="status" value="ALT_SEQ"/>
    <property type="molecule type" value="mRNA"/>
</dbReference>
<dbReference type="EMBL" id="AJ704764">
    <property type="protein sequence ID" value="CAG28924.1"/>
    <property type="molecule type" value="mRNA"/>
</dbReference>
<dbReference type="EMBL" id="AB014545">
    <property type="protein sequence ID" value="BAA31620.2"/>
    <property type="status" value="ALT_INIT"/>
    <property type="molecule type" value="mRNA"/>
</dbReference>
<dbReference type="EMBL" id="AK294987">
    <property type="protein sequence ID" value="BAG58054.1"/>
    <property type="molecule type" value="mRNA"/>
</dbReference>
<dbReference type="EMBL" id="AC005004">
    <property type="status" value="NOT_ANNOTATED_CDS"/>
    <property type="molecule type" value="Genomic_DNA"/>
</dbReference>
<dbReference type="EMBL" id="AL022331">
    <property type="status" value="NOT_ANNOTATED_CDS"/>
    <property type="molecule type" value="Genomic_DNA"/>
</dbReference>
<dbReference type="EMBL" id="Z83856">
    <property type="status" value="NOT_ANNOTATED_CDS"/>
    <property type="molecule type" value="Genomic_DNA"/>
</dbReference>
<dbReference type="EMBL" id="Z82190">
    <property type="status" value="NOT_ANNOTATED_CDS"/>
    <property type="molecule type" value="Genomic_DNA"/>
</dbReference>
<dbReference type="EMBL" id="CH471095">
    <property type="protein sequence ID" value="EAW59996.1"/>
    <property type="molecule type" value="Genomic_DNA"/>
</dbReference>
<dbReference type="EMBL" id="BC057797">
    <property type="protein sequence ID" value="AAH57797.1"/>
    <property type="molecule type" value="mRNA"/>
</dbReference>
<dbReference type="EMBL" id="BC136612">
    <property type="protein sequence ID" value="AAI36613.1"/>
    <property type="molecule type" value="mRNA"/>
</dbReference>
<dbReference type="EMBL" id="BC146766">
    <property type="protein sequence ID" value="AAI46767.1"/>
    <property type="molecule type" value="mRNA"/>
</dbReference>
<dbReference type="EMBL" id="BX640828">
    <property type="protein sequence ID" value="CAE45904.1"/>
    <property type="molecule type" value="mRNA"/>
</dbReference>
<dbReference type="EMBL" id="CR749304">
    <property type="protein sequence ID" value="CAH18159.1"/>
    <property type="status" value="ALT_INIT"/>
    <property type="molecule type" value="mRNA"/>
</dbReference>
<dbReference type="CCDS" id="CCDS43006.1">
    <molecule id="O75140-1"/>
</dbReference>
<dbReference type="CCDS" id="CCDS43007.1">
    <molecule id="O75140-2"/>
</dbReference>
<dbReference type="CCDS" id="CCDS46692.1">
    <molecule id="O75140-9"/>
</dbReference>
<dbReference type="CCDS" id="CCDS56229.1">
    <molecule id="O75140-8"/>
</dbReference>
<dbReference type="CCDS" id="CCDS74849.1">
    <molecule id="O75140-10"/>
</dbReference>
<dbReference type="CCDS" id="CCDS87017.1">
    <molecule id="O75140-4"/>
</dbReference>
<dbReference type="PIR" id="T00376">
    <property type="entry name" value="T00376"/>
</dbReference>
<dbReference type="RefSeq" id="NP_001007189.1">
    <molecule id="O75140-2"/>
    <property type="nucleotide sequence ID" value="NM_001007188.4"/>
</dbReference>
<dbReference type="RefSeq" id="NP_001129501.1">
    <molecule id="O75140-9"/>
    <property type="nucleotide sequence ID" value="NM_001136029.4"/>
</dbReference>
<dbReference type="RefSeq" id="NP_001229825.1">
    <molecule id="O75140-10"/>
    <property type="nucleotide sequence ID" value="NM_001242896.3"/>
</dbReference>
<dbReference type="RefSeq" id="NP_001229826.1">
    <molecule id="O75140-8"/>
    <property type="nucleotide sequence ID" value="NM_001242897.2"/>
</dbReference>
<dbReference type="RefSeq" id="NP_001350781.1">
    <molecule id="O75140-4"/>
    <property type="nucleotide sequence ID" value="NM_001363852.2"/>
</dbReference>
<dbReference type="RefSeq" id="NP_001351247.1">
    <molecule id="O75140-10"/>
    <property type="nucleotide sequence ID" value="NM_001364318.2"/>
</dbReference>
<dbReference type="RefSeq" id="NP_001351249.1">
    <molecule id="O75140-4"/>
    <property type="nucleotide sequence ID" value="NM_001364320.2"/>
</dbReference>
<dbReference type="RefSeq" id="NP_001356832.1">
    <molecule id="O75140-1"/>
    <property type="nucleotide sequence ID" value="NM_001369903.1"/>
</dbReference>
<dbReference type="RefSeq" id="NP_055477.1">
    <molecule id="O75140-1"/>
    <property type="nucleotide sequence ID" value="NM_014662.6"/>
</dbReference>
<dbReference type="RefSeq" id="XP_005261919.1">
    <property type="nucleotide sequence ID" value="XM_005261862.1"/>
</dbReference>
<dbReference type="RefSeq" id="XP_011528859.1">
    <molecule id="O75140-9"/>
    <property type="nucleotide sequence ID" value="XM_011530557.3"/>
</dbReference>
<dbReference type="RefSeq" id="XP_011528860.1">
    <property type="nucleotide sequence ID" value="XM_011530558.2"/>
</dbReference>
<dbReference type="RefSeq" id="XP_011528861.1">
    <property type="nucleotide sequence ID" value="XM_011530559.2"/>
</dbReference>
<dbReference type="RefSeq" id="XP_011528865.1">
    <molecule id="O75140-8"/>
    <property type="nucleotide sequence ID" value="XM_011530563.3"/>
</dbReference>
<dbReference type="RefSeq" id="XP_016884598.1">
    <property type="nucleotide sequence ID" value="XM_017029109.1"/>
</dbReference>
<dbReference type="RefSeq" id="XP_016884599.1">
    <property type="nucleotide sequence ID" value="XM_017029110.1"/>
</dbReference>
<dbReference type="RefSeq" id="XP_016884600.1">
    <property type="nucleotide sequence ID" value="XM_017029111.1"/>
</dbReference>
<dbReference type="RefSeq" id="XP_054182153.1">
    <molecule id="O75140-9"/>
    <property type="nucleotide sequence ID" value="XM_054326178.1"/>
</dbReference>
<dbReference type="RefSeq" id="XP_054182157.1">
    <molecule id="O75140-8"/>
    <property type="nucleotide sequence ID" value="XM_054326182.1"/>
</dbReference>
<dbReference type="PDB" id="6CES">
    <property type="method" value="EM"/>
    <property type="resolution" value="4.00 A"/>
    <property type="chains" value="D=1-1603"/>
</dbReference>
<dbReference type="PDB" id="6CET">
    <property type="method" value="EM"/>
    <property type="resolution" value="4.40 A"/>
    <property type="chains" value="D=1-1603"/>
</dbReference>
<dbReference type="PDB" id="7T3A">
    <property type="method" value="EM"/>
    <property type="resolution" value="4.00 A"/>
    <property type="chains" value="A=1-1603"/>
</dbReference>
<dbReference type="PDB" id="7T3B">
    <property type="method" value="EM"/>
    <property type="resolution" value="3.90 A"/>
    <property type="chains" value="A=1-1603"/>
</dbReference>
<dbReference type="PDB" id="7T3C">
    <property type="method" value="EM"/>
    <property type="resolution" value="4.00 A"/>
    <property type="chains" value="A=1-1603"/>
</dbReference>
<dbReference type="PDB" id="8FW5">
    <property type="method" value="EM"/>
    <property type="resolution" value="3.08 A"/>
    <property type="chains" value="A=1-1603"/>
</dbReference>
<dbReference type="PDBsum" id="6CES"/>
<dbReference type="PDBsum" id="6CET"/>
<dbReference type="PDBsum" id="7T3A"/>
<dbReference type="PDBsum" id="7T3B"/>
<dbReference type="PDBsum" id="7T3C"/>
<dbReference type="PDBsum" id="8FW5"/>
<dbReference type="EMDB" id="EMD-25652"/>
<dbReference type="EMDB" id="EMD-25653"/>
<dbReference type="EMDB" id="EMD-25654"/>
<dbReference type="EMDB" id="EMD-29497"/>
<dbReference type="EMDB" id="EMD-7464"/>
<dbReference type="EMDB" id="EMD-7465"/>
<dbReference type="SMR" id="O75140"/>
<dbReference type="BioGRID" id="115034">
    <property type="interactions" value="73"/>
</dbReference>
<dbReference type="ComplexPortal" id="CPX-6226">
    <property type="entry name" value="GATOR1 complex"/>
</dbReference>
<dbReference type="CORUM" id="O75140"/>
<dbReference type="DIP" id="DIP-62050N"/>
<dbReference type="FunCoup" id="O75140">
    <property type="interactions" value="2710"/>
</dbReference>
<dbReference type="IntAct" id="O75140">
    <property type="interactions" value="28"/>
</dbReference>
<dbReference type="MINT" id="O75140"/>
<dbReference type="STRING" id="9606.ENSP00000498382"/>
<dbReference type="GlyCosmos" id="O75140">
    <property type="glycosylation" value="1 site, 1 glycan"/>
</dbReference>
<dbReference type="GlyGen" id="O75140">
    <property type="glycosylation" value="1 site, 1 O-linked glycan (1 site)"/>
</dbReference>
<dbReference type="iPTMnet" id="O75140"/>
<dbReference type="PhosphoSitePlus" id="O75140"/>
<dbReference type="BioMuta" id="DEPDC5"/>
<dbReference type="jPOST" id="O75140"/>
<dbReference type="MassIVE" id="O75140"/>
<dbReference type="PaxDb" id="9606-ENSP00000383105"/>
<dbReference type="PeptideAtlas" id="O75140"/>
<dbReference type="ProteomicsDB" id="1924"/>
<dbReference type="ProteomicsDB" id="49795">
    <molecule id="O75140-10"/>
</dbReference>
<dbReference type="ProteomicsDB" id="49796">
    <molecule id="O75140-2"/>
</dbReference>
<dbReference type="ProteomicsDB" id="49798">
    <molecule id="O75140-4"/>
</dbReference>
<dbReference type="ProteomicsDB" id="49799">
    <molecule id="O75140-5"/>
</dbReference>
<dbReference type="ProteomicsDB" id="49800">
    <molecule id="O75140-6"/>
</dbReference>
<dbReference type="ProteomicsDB" id="49802">
    <molecule id="O75140-8"/>
</dbReference>
<dbReference type="Pumba" id="O75140"/>
<dbReference type="ABCD" id="O75140">
    <property type="antibodies" value="1 sequenced antibody"/>
</dbReference>
<dbReference type="Antibodypedia" id="65139">
    <property type="antibodies" value="72 antibodies from 19 providers"/>
</dbReference>
<dbReference type="DNASU" id="9681"/>
<dbReference type="Ensembl" id="ENST00000382111.6">
    <molecule id="O75140-5"/>
    <property type="protein sequence ID" value="ENSP00000371545.2"/>
    <property type="gene ID" value="ENSG00000100150.20"/>
</dbReference>
<dbReference type="Ensembl" id="ENST00000382112.8">
    <molecule id="O75140-10"/>
    <property type="protein sequence ID" value="ENSP00000371546.4"/>
    <property type="gene ID" value="ENSG00000100150.20"/>
</dbReference>
<dbReference type="Ensembl" id="ENST00000400242.8">
    <molecule id="O75140-2"/>
    <property type="protein sequence ID" value="ENSP00000383101.3"/>
    <property type="gene ID" value="ENSG00000100150.20"/>
</dbReference>
<dbReference type="Ensembl" id="ENST00000400248.7">
    <molecule id="O75140-1"/>
    <property type="protein sequence ID" value="ENSP00000383107.1"/>
    <property type="gene ID" value="ENSG00000100150.20"/>
</dbReference>
<dbReference type="Ensembl" id="ENST00000400249.7">
    <molecule id="O75140-4"/>
    <property type="protein sequence ID" value="ENSP00000383108.3"/>
    <property type="gene ID" value="ENSG00000100150.20"/>
</dbReference>
<dbReference type="Ensembl" id="ENST00000535622.6">
    <molecule id="O75140-8"/>
    <property type="protein sequence ID" value="ENSP00000440210.1"/>
    <property type="gene ID" value="ENSG00000100150.20"/>
</dbReference>
<dbReference type="Ensembl" id="ENST00000642696.1">
    <molecule id="O75140-1"/>
    <property type="protein sequence ID" value="ENSP00000495917.1"/>
    <property type="gene ID" value="ENSG00000100150.20"/>
</dbReference>
<dbReference type="Ensembl" id="ENST00000644331.1">
    <molecule id="O75140-4"/>
    <property type="protein sequence ID" value="ENSP00000494406.1"/>
    <property type="gene ID" value="ENSG00000100150.20"/>
</dbReference>
<dbReference type="Ensembl" id="ENST00000645711.1">
    <molecule id="O75140-9"/>
    <property type="protein sequence ID" value="ENSP00000493489.1"/>
    <property type="gene ID" value="ENSG00000100150.20"/>
</dbReference>
<dbReference type="Ensembl" id="ENST00000646755.1">
    <molecule id="O75140-2"/>
    <property type="protein sequence ID" value="ENSP00000496532.1"/>
    <property type="gene ID" value="ENSG00000100150.20"/>
</dbReference>
<dbReference type="Ensembl" id="ENST00000651528.2">
    <molecule id="O75140-10"/>
    <property type="protein sequence ID" value="ENSP00000498382.1"/>
    <property type="gene ID" value="ENSG00000100150.20"/>
</dbReference>
<dbReference type="GeneID" id="9681"/>
<dbReference type="KEGG" id="hsa:9681"/>
<dbReference type="MANE-Select" id="ENST00000651528.2">
    <property type="protein sequence ID" value="ENSP00000498382.1"/>
    <property type="RefSeq nucleotide sequence ID" value="NM_001242896.3"/>
    <property type="RefSeq protein sequence ID" value="NP_001229825.1"/>
</dbReference>
<dbReference type="UCSC" id="uc003alr.3">
    <molecule id="O75140-10"/>
    <property type="organism name" value="human"/>
</dbReference>
<dbReference type="AGR" id="HGNC:18423"/>
<dbReference type="CTD" id="9681"/>
<dbReference type="DisGeNET" id="9681"/>
<dbReference type="GeneCards" id="DEPDC5"/>
<dbReference type="GeneReviews" id="DEPDC5"/>
<dbReference type="HGNC" id="HGNC:18423">
    <property type="gene designation" value="DEPDC5"/>
</dbReference>
<dbReference type="HPA" id="ENSG00000100150">
    <property type="expression patterns" value="Low tissue specificity"/>
</dbReference>
<dbReference type="MalaCards" id="DEPDC5"/>
<dbReference type="MIM" id="604364">
    <property type="type" value="phenotype"/>
</dbReference>
<dbReference type="MIM" id="614191">
    <property type="type" value="gene"/>
</dbReference>
<dbReference type="MIM" id="620504">
    <property type="type" value="phenotype"/>
</dbReference>
<dbReference type="neXtProt" id="NX_O75140"/>
<dbReference type="OpenTargets" id="ENSG00000100150"/>
<dbReference type="Orphanet" id="101046">
    <property type="disease" value="Epilepsy with auditory features"/>
</dbReference>
<dbReference type="Orphanet" id="98820">
    <property type="disease" value="Familial focal epilepsy with variable foci"/>
</dbReference>
<dbReference type="Orphanet" id="98784">
    <property type="disease" value="Sleep-related hypermotor epilepsy"/>
</dbReference>
<dbReference type="PharmGKB" id="PA134864958"/>
<dbReference type="VEuPathDB" id="HostDB:ENSG00000100150"/>
<dbReference type="eggNOG" id="KOG3572">
    <property type="taxonomic scope" value="Eukaryota"/>
</dbReference>
<dbReference type="GeneTree" id="ENSGT00390000016559"/>
<dbReference type="HOGENOM" id="CLU_004411_0_0_1"/>
<dbReference type="InParanoid" id="O75140"/>
<dbReference type="OMA" id="RTWHFKR"/>
<dbReference type="OrthoDB" id="39497at2759"/>
<dbReference type="PAN-GO" id="O75140">
    <property type="GO annotations" value="6 GO annotations based on evolutionary models"/>
</dbReference>
<dbReference type="PathwayCommons" id="O75140"/>
<dbReference type="Reactome" id="R-HSA-9639288">
    <property type="pathway name" value="Amino acids regulate mTORC1"/>
</dbReference>
<dbReference type="SignaLink" id="O75140"/>
<dbReference type="SIGNOR" id="O75140"/>
<dbReference type="BioGRID-ORCS" id="9681">
    <property type="hits" value="44 hits in 1171 CRISPR screens"/>
</dbReference>
<dbReference type="ChiTaRS" id="DEPDC5">
    <property type="organism name" value="human"/>
</dbReference>
<dbReference type="GeneWiki" id="DEPDC5"/>
<dbReference type="GenomeRNAi" id="9681"/>
<dbReference type="Pharos" id="O75140">
    <property type="development level" value="Tbio"/>
</dbReference>
<dbReference type="PRO" id="PR:O75140"/>
<dbReference type="Proteomes" id="UP000005640">
    <property type="component" value="Chromosome 22"/>
</dbReference>
<dbReference type="RNAct" id="O75140">
    <property type="molecule type" value="protein"/>
</dbReference>
<dbReference type="Bgee" id="ENSG00000100150">
    <property type="expression patterns" value="Expressed in paraflocculus and 151 other cell types or tissues"/>
</dbReference>
<dbReference type="ExpressionAtlas" id="O75140">
    <property type="expression patterns" value="baseline and differential"/>
</dbReference>
<dbReference type="GO" id="GO:0005829">
    <property type="term" value="C:cytosol"/>
    <property type="evidence" value="ECO:0000250"/>
    <property type="project" value="UniProtKB"/>
</dbReference>
<dbReference type="GO" id="GO:1990130">
    <property type="term" value="C:GATOR1 complex"/>
    <property type="evidence" value="ECO:0000314"/>
    <property type="project" value="UniProtKB"/>
</dbReference>
<dbReference type="GO" id="GO:0005765">
    <property type="term" value="C:lysosomal membrane"/>
    <property type="evidence" value="ECO:0000314"/>
    <property type="project" value="UniProtKB"/>
</dbReference>
<dbReference type="GO" id="GO:0005764">
    <property type="term" value="C:lysosome"/>
    <property type="evidence" value="ECO:0000314"/>
    <property type="project" value="UniProtKB"/>
</dbReference>
<dbReference type="GO" id="GO:0048471">
    <property type="term" value="C:perinuclear region of cytoplasm"/>
    <property type="evidence" value="ECO:0000250"/>
    <property type="project" value="UniProtKB"/>
</dbReference>
<dbReference type="GO" id="GO:0005096">
    <property type="term" value="F:GTPase activator activity"/>
    <property type="evidence" value="ECO:0007669"/>
    <property type="project" value="UniProtKB-KW"/>
</dbReference>
<dbReference type="GO" id="GO:0044877">
    <property type="term" value="F:protein-containing complex binding"/>
    <property type="evidence" value="ECO:0000314"/>
    <property type="project" value="UniProtKB"/>
</dbReference>
<dbReference type="GO" id="GO:0031267">
    <property type="term" value="F:small GTPase binding"/>
    <property type="evidence" value="ECO:0000314"/>
    <property type="project" value="UniProtKB"/>
</dbReference>
<dbReference type="GO" id="GO:0034198">
    <property type="term" value="P:cellular response to amino acid starvation"/>
    <property type="evidence" value="ECO:0000314"/>
    <property type="project" value="UniProtKB"/>
</dbReference>
<dbReference type="GO" id="GO:0035556">
    <property type="term" value="P:intracellular signal transduction"/>
    <property type="evidence" value="ECO:0007669"/>
    <property type="project" value="InterPro"/>
</dbReference>
<dbReference type="GO" id="GO:1904262">
    <property type="term" value="P:negative regulation of TORC1 signaling"/>
    <property type="evidence" value="ECO:0000314"/>
    <property type="project" value="UniProtKB"/>
</dbReference>
<dbReference type="GO" id="GO:0010508">
    <property type="term" value="P:positive regulation of autophagy"/>
    <property type="evidence" value="ECO:0000318"/>
    <property type="project" value="GO_Central"/>
</dbReference>
<dbReference type="CDD" id="cd04449">
    <property type="entry name" value="DEP_DEPDC5-like"/>
    <property type="match status" value="1"/>
</dbReference>
<dbReference type="FunFam" id="1.10.10.10:FF:000171">
    <property type="entry name" value="DEP domain-containing protein 5 isoform X2"/>
    <property type="match status" value="1"/>
</dbReference>
<dbReference type="Gene3D" id="1.10.10.10">
    <property type="entry name" value="Winged helix-like DNA-binding domain superfamily/Winged helix DNA-binding domain"/>
    <property type="match status" value="1"/>
</dbReference>
<dbReference type="InterPro" id="IPR000591">
    <property type="entry name" value="DEP_dom"/>
</dbReference>
<dbReference type="InterPro" id="IPR045838">
    <property type="entry name" value="DEPDC5_CTD"/>
</dbReference>
<dbReference type="InterPro" id="IPR027244">
    <property type="entry name" value="IML1"/>
</dbReference>
<dbReference type="InterPro" id="IPR055213">
    <property type="entry name" value="IML1_double_psi_beta_barrel"/>
</dbReference>
<dbReference type="InterPro" id="IPR048255">
    <property type="entry name" value="IML1_N"/>
</dbReference>
<dbReference type="InterPro" id="IPR036388">
    <property type="entry name" value="WH-like_DNA-bd_sf"/>
</dbReference>
<dbReference type="InterPro" id="IPR036390">
    <property type="entry name" value="WH_DNA-bd_sf"/>
</dbReference>
<dbReference type="PANTHER" id="PTHR13179">
    <property type="entry name" value="DEP DOMAIN CONTAINING PROTEIN 5"/>
    <property type="match status" value="1"/>
</dbReference>
<dbReference type="PANTHER" id="PTHR13179:SF8">
    <property type="entry name" value="GATOR COMPLEX PROTEIN DEPDC5"/>
    <property type="match status" value="1"/>
</dbReference>
<dbReference type="Pfam" id="PF00610">
    <property type="entry name" value="DEP"/>
    <property type="match status" value="1"/>
</dbReference>
<dbReference type="Pfam" id="PF19418">
    <property type="entry name" value="DEPDC5_CTD"/>
    <property type="match status" value="1"/>
</dbReference>
<dbReference type="Pfam" id="PF12257">
    <property type="entry name" value="IML1"/>
    <property type="match status" value="1"/>
</dbReference>
<dbReference type="Pfam" id="PF23013">
    <property type="entry name" value="IML1_N"/>
    <property type="match status" value="1"/>
</dbReference>
<dbReference type="SMART" id="SM00049">
    <property type="entry name" value="DEP"/>
    <property type="match status" value="1"/>
</dbReference>
<dbReference type="SUPFAM" id="SSF46785">
    <property type="entry name" value="Winged helix' DNA-binding domain"/>
    <property type="match status" value="1"/>
</dbReference>
<dbReference type="PROSITE" id="PS50186">
    <property type="entry name" value="DEP"/>
    <property type="match status" value="1"/>
</dbReference>
<proteinExistence type="evidence at protein level"/>
<sequence length="1603" mass="181264">MRTTKVYKLVIHKKGFGGSDDELVVNPKVFPHIKLGDIVEIAHPNDEYSPLLLQVKSLKEDLQKETISVDQTVTQVFRLRPYQDVYVNVVDPKDVTLDLVELTFKDQYIGRGDMWRLKKSLVSTCAYITQKVEFAGIRAQAGELWVKNEKVMCGYISEDTRVVFRSTSAMVYIFIQMSCEMWDFDIYGDLYFEKAVNGFLADLFTKWKEKNCSHEVTVVLFSRTFYDAKSVDEFPEINRASIRQDHKGRFYEDFYKVVVQNERREEWTSLLVTIKKLFIQYPVLVRLEQAEGFPQGDNSTSAQGNYLEAINLSFNVFDKHYINRNFDRTGQMSVVITPGVGVFEVDRLLMILTKQRMIDNGIGVDLVCMGEQPLHAVPLFKLHNRSAPRDSRLGDDYNIPHWINHSFYTSKSQLFCNSFTPRIKLAGKKPASEKAKNGRDTSLGSPKESENALPIQVDYDAYDAQVFRLPGPSRAQCLTTCRSVRERESHSRKSASSCDVSSSPSLPSRTLPTEEVRSQASDDSSLGKSANILMIPHPHLHQYEVSSSLGYTSTRDVLENMMEPPQRDSSAPGRFHVGSAESMLHVRPGGYTPQRALINPFAPSRMPMKLTSNRRRWMHTFPVGPSGEAIQIHHQTRQNMAELQGSGQRDPTHSSAELLELAYHEAAGRHSNSRQPGDGMSFLNFSGTEELSVGLLSNSGAGMNPRTQNKDSLEDSVSTSPDPILTLSAPPVVPGFCCTVGVDWKSLTTPACLPLTTDYFPDRQGLQNDYTEGCYDLLPEADIDRRDEDGVQMTAQQVFEEFICQRLMQGYQIIVQPKTQKPNPAVPPPLSSSPLYSRGLVSRNRPEEEDQYWLSMGRTFHKVTLKDKMITVTRYLPKYPYESAQIHYTYSLCPSHSDSEFVSCWVEFSHERLEEYKWNYLDQYICSAGSEDFSLIESLKFWRTRFLLLPACVTATKRITEGEAHCDIYGDRPRADEDEWQLLDGFVRFVEGLNRIRRRHRSDRMMRKGTAMKGLQMTGPISTHSLESTAPPVGKKGTSALSALLEMEASQKCLGEQQAAVHGGKSSAQSAESSSVAMTPTYMDSPRKDGAFFMEFVRSPRTASSAFYPQVSVDQTATPMLDGTSLGICTGQSMDRGNSQTFGNSQNIGEQGYSSTNSSDSSSQQLVASSLTSSSTLTEILEAMKHPSTGVQLLSEQKGLSPYCFISAEVVHWLVNHVEGIQTQAMAIDIMQKMLEEQLITHASGEAWRTFIYGFYFYKIVTDKEPDRVAMQQPATTWHTAGVDDFASFQRKWFEVAFVAEELVHSEIPAFLLPWLPSRPASYASRHSSFSRSFGGRSQAAALLAATVPEQRTVTLDVDVNNRTDRLEWCSCYYHGNFSLNAAFEIKLHWMAVTAAVLFEMVQGWHRKATSCGFLLVPVLEGPFALPSYLYGDPLRAQLFIPLNISCLLKEGSEHLFDSFEPETYWDRMHLFQEAIAHRFGFVQDKYSASAFNFPAENKPQYIHVTGTVFLQLPYSKRKFSGQQRRRRNSTSSTNQNMFCEERVGYNWAYNTMLTKTWRSSATGDEKFADRLLKDFTDFCINRDNRLVTFWTSCLEKMHASAP</sequence>
<reference key="1">
    <citation type="journal article" date="2005" name="Genes Chromosomes Cancer">
        <title>Complex chromosome 22 rearrangements in astrocytic tumors identified using microsatellite and chromosome 22 tile path array analysis.</title>
        <authorList>
            <person name="Seng T.J."/>
            <person name="Ichimura K."/>
            <person name="Liu L."/>
            <person name="Tingby O."/>
            <person name="Pearson D.M."/>
            <person name="Collins V.P."/>
        </authorList>
    </citation>
    <scope>NUCLEOTIDE SEQUENCE [MRNA] (ISOFORMS 1; 4 AND 9)</scope>
    <source>
        <tissue>Cerebellum</tissue>
    </source>
</reference>
<reference key="2">
    <citation type="journal article" date="1998" name="DNA Res.">
        <title>Prediction of the coding sequences of unidentified human genes. X. The complete sequences of 100 new cDNA clones from brain which can code for large proteins in vitro.</title>
        <authorList>
            <person name="Ishikawa K."/>
            <person name="Nagase T."/>
            <person name="Suyama M."/>
            <person name="Miyajima N."/>
            <person name="Tanaka A."/>
            <person name="Kotani H."/>
            <person name="Nomura N."/>
            <person name="Ohara O."/>
        </authorList>
    </citation>
    <scope>NUCLEOTIDE SEQUENCE [LARGE SCALE MRNA] (ISOFORM 1)</scope>
    <source>
        <tissue>Brain</tissue>
    </source>
</reference>
<reference key="3">
    <citation type="journal article" date="2004" name="Nat. Genet.">
        <title>Complete sequencing and characterization of 21,243 full-length human cDNAs.</title>
        <authorList>
            <person name="Ota T."/>
            <person name="Suzuki Y."/>
            <person name="Nishikawa T."/>
            <person name="Otsuki T."/>
            <person name="Sugiyama T."/>
            <person name="Irie R."/>
            <person name="Wakamatsu A."/>
            <person name="Hayashi K."/>
            <person name="Sato H."/>
            <person name="Nagai K."/>
            <person name="Kimura K."/>
            <person name="Makita H."/>
            <person name="Sekine M."/>
            <person name="Obayashi M."/>
            <person name="Nishi T."/>
            <person name="Shibahara T."/>
            <person name="Tanaka T."/>
            <person name="Ishii S."/>
            <person name="Yamamoto J."/>
            <person name="Saito K."/>
            <person name="Kawai Y."/>
            <person name="Isono Y."/>
            <person name="Nakamura Y."/>
            <person name="Nagahari K."/>
            <person name="Murakami K."/>
            <person name="Yasuda T."/>
            <person name="Iwayanagi T."/>
            <person name="Wagatsuma M."/>
            <person name="Shiratori A."/>
            <person name="Sudo H."/>
            <person name="Hosoiri T."/>
            <person name="Kaku Y."/>
            <person name="Kodaira H."/>
            <person name="Kondo H."/>
            <person name="Sugawara M."/>
            <person name="Takahashi M."/>
            <person name="Kanda K."/>
            <person name="Yokoi T."/>
            <person name="Furuya T."/>
            <person name="Kikkawa E."/>
            <person name="Omura Y."/>
            <person name="Abe K."/>
            <person name="Kamihara K."/>
            <person name="Katsuta N."/>
            <person name="Sato K."/>
            <person name="Tanikawa M."/>
            <person name="Yamazaki M."/>
            <person name="Ninomiya K."/>
            <person name="Ishibashi T."/>
            <person name="Yamashita H."/>
            <person name="Murakawa K."/>
            <person name="Fujimori K."/>
            <person name="Tanai H."/>
            <person name="Kimata M."/>
            <person name="Watanabe M."/>
            <person name="Hiraoka S."/>
            <person name="Chiba Y."/>
            <person name="Ishida S."/>
            <person name="Ono Y."/>
            <person name="Takiguchi S."/>
            <person name="Watanabe S."/>
            <person name="Yosida M."/>
            <person name="Hotuta T."/>
            <person name="Kusano J."/>
            <person name="Kanehori K."/>
            <person name="Takahashi-Fujii A."/>
            <person name="Hara H."/>
            <person name="Tanase T.-O."/>
            <person name="Nomura Y."/>
            <person name="Togiya S."/>
            <person name="Komai F."/>
            <person name="Hara R."/>
            <person name="Takeuchi K."/>
            <person name="Arita M."/>
            <person name="Imose N."/>
            <person name="Musashino K."/>
            <person name="Yuuki H."/>
            <person name="Oshima A."/>
            <person name="Sasaki N."/>
            <person name="Aotsuka S."/>
            <person name="Yoshikawa Y."/>
            <person name="Matsunawa H."/>
            <person name="Ichihara T."/>
            <person name="Shiohata N."/>
            <person name="Sano S."/>
            <person name="Moriya S."/>
            <person name="Momiyama H."/>
            <person name="Satoh N."/>
            <person name="Takami S."/>
            <person name="Terashima Y."/>
            <person name="Suzuki O."/>
            <person name="Nakagawa S."/>
            <person name="Senoh A."/>
            <person name="Mizoguchi H."/>
            <person name="Goto Y."/>
            <person name="Shimizu F."/>
            <person name="Wakebe H."/>
            <person name="Hishigaki H."/>
            <person name="Watanabe T."/>
            <person name="Sugiyama A."/>
            <person name="Takemoto M."/>
            <person name="Kawakami B."/>
            <person name="Yamazaki M."/>
            <person name="Watanabe K."/>
            <person name="Kumagai A."/>
            <person name="Itakura S."/>
            <person name="Fukuzumi Y."/>
            <person name="Fujimori Y."/>
            <person name="Komiyama M."/>
            <person name="Tashiro H."/>
            <person name="Tanigami A."/>
            <person name="Fujiwara T."/>
            <person name="Ono T."/>
            <person name="Yamada K."/>
            <person name="Fujii Y."/>
            <person name="Ozaki K."/>
            <person name="Hirao M."/>
            <person name="Ohmori Y."/>
            <person name="Kawabata A."/>
            <person name="Hikiji T."/>
            <person name="Kobatake N."/>
            <person name="Inagaki H."/>
            <person name="Ikema Y."/>
            <person name="Okamoto S."/>
            <person name="Okitani R."/>
            <person name="Kawakami T."/>
            <person name="Noguchi S."/>
            <person name="Itoh T."/>
            <person name="Shigeta K."/>
            <person name="Senba T."/>
            <person name="Matsumura K."/>
            <person name="Nakajima Y."/>
            <person name="Mizuno T."/>
            <person name="Morinaga M."/>
            <person name="Sasaki M."/>
            <person name="Togashi T."/>
            <person name="Oyama M."/>
            <person name="Hata H."/>
            <person name="Watanabe M."/>
            <person name="Komatsu T."/>
            <person name="Mizushima-Sugano J."/>
            <person name="Satoh T."/>
            <person name="Shirai Y."/>
            <person name="Takahashi Y."/>
            <person name="Nakagawa K."/>
            <person name="Okumura K."/>
            <person name="Nagase T."/>
            <person name="Nomura N."/>
            <person name="Kikuchi H."/>
            <person name="Masuho Y."/>
            <person name="Yamashita R."/>
            <person name="Nakai K."/>
            <person name="Yada T."/>
            <person name="Nakamura Y."/>
            <person name="Ohara O."/>
            <person name="Isogai T."/>
            <person name="Sugano S."/>
        </authorList>
    </citation>
    <scope>NUCLEOTIDE SEQUENCE [LARGE SCALE MRNA] (ISOFORM 8)</scope>
    <source>
        <tissue>Brain</tissue>
    </source>
</reference>
<reference key="4">
    <citation type="journal article" date="1999" name="Nature">
        <title>The DNA sequence of human chromosome 22.</title>
        <authorList>
            <person name="Dunham I."/>
            <person name="Hunt A.R."/>
            <person name="Collins J.E."/>
            <person name="Bruskiewich R."/>
            <person name="Beare D.M."/>
            <person name="Clamp M."/>
            <person name="Smink L.J."/>
            <person name="Ainscough R."/>
            <person name="Almeida J.P."/>
            <person name="Babbage A.K."/>
            <person name="Bagguley C."/>
            <person name="Bailey J."/>
            <person name="Barlow K.F."/>
            <person name="Bates K.N."/>
            <person name="Beasley O.P."/>
            <person name="Bird C.P."/>
            <person name="Blakey S.E."/>
            <person name="Bridgeman A.M."/>
            <person name="Buck D."/>
            <person name="Burgess J."/>
            <person name="Burrill W.D."/>
            <person name="Burton J."/>
            <person name="Carder C."/>
            <person name="Carter N.P."/>
            <person name="Chen Y."/>
            <person name="Clark G."/>
            <person name="Clegg S.M."/>
            <person name="Cobley V.E."/>
            <person name="Cole C.G."/>
            <person name="Collier R.E."/>
            <person name="Connor R."/>
            <person name="Conroy D."/>
            <person name="Corby N.R."/>
            <person name="Coville G.J."/>
            <person name="Cox A.V."/>
            <person name="Davis J."/>
            <person name="Dawson E."/>
            <person name="Dhami P.D."/>
            <person name="Dockree C."/>
            <person name="Dodsworth S.J."/>
            <person name="Durbin R.M."/>
            <person name="Ellington A.G."/>
            <person name="Evans K.L."/>
            <person name="Fey J.M."/>
            <person name="Fleming K."/>
            <person name="French L."/>
            <person name="Garner A.A."/>
            <person name="Gilbert J.G.R."/>
            <person name="Goward M.E."/>
            <person name="Grafham D.V."/>
            <person name="Griffiths M.N.D."/>
            <person name="Hall C."/>
            <person name="Hall R.E."/>
            <person name="Hall-Tamlyn G."/>
            <person name="Heathcott R.W."/>
            <person name="Ho S."/>
            <person name="Holmes S."/>
            <person name="Hunt S.E."/>
            <person name="Jones M.C."/>
            <person name="Kershaw J."/>
            <person name="Kimberley A.M."/>
            <person name="King A."/>
            <person name="Laird G.K."/>
            <person name="Langford C.F."/>
            <person name="Leversha M.A."/>
            <person name="Lloyd C."/>
            <person name="Lloyd D.M."/>
            <person name="Martyn I.D."/>
            <person name="Mashreghi-Mohammadi M."/>
            <person name="Matthews L.H."/>
            <person name="Mccann O.T."/>
            <person name="Mcclay J."/>
            <person name="Mclaren S."/>
            <person name="McMurray A.A."/>
            <person name="Milne S.A."/>
            <person name="Mortimore B.J."/>
            <person name="Odell C.N."/>
            <person name="Pavitt R."/>
            <person name="Pearce A.V."/>
            <person name="Pearson D."/>
            <person name="Phillimore B.J.C.T."/>
            <person name="Phillips S.H."/>
            <person name="Plumb R.W."/>
            <person name="Ramsay H."/>
            <person name="Ramsey Y."/>
            <person name="Rogers L."/>
            <person name="Ross M.T."/>
            <person name="Scott C.E."/>
            <person name="Sehra H.K."/>
            <person name="Skuce C.D."/>
            <person name="Smalley S."/>
            <person name="Smith M.L."/>
            <person name="Soderlund C."/>
            <person name="Spragon L."/>
            <person name="Steward C.A."/>
            <person name="Sulston J.E."/>
            <person name="Swann R.M."/>
            <person name="Vaudin M."/>
            <person name="Wall M."/>
            <person name="Wallis J.M."/>
            <person name="Whiteley M.N."/>
            <person name="Willey D.L."/>
            <person name="Williams L."/>
            <person name="Williams S.A."/>
            <person name="Williamson H."/>
            <person name="Wilmer T.E."/>
            <person name="Wilming L."/>
            <person name="Wright C.L."/>
            <person name="Hubbard T."/>
            <person name="Bentley D.R."/>
            <person name="Beck S."/>
            <person name="Rogers J."/>
            <person name="Shimizu N."/>
            <person name="Minoshima S."/>
            <person name="Kawasaki K."/>
            <person name="Sasaki T."/>
            <person name="Asakawa S."/>
            <person name="Kudoh J."/>
            <person name="Shintani A."/>
            <person name="Shibuya K."/>
            <person name="Yoshizaki Y."/>
            <person name="Aoki N."/>
            <person name="Mitsuyama S."/>
            <person name="Roe B.A."/>
            <person name="Chen F."/>
            <person name="Chu L."/>
            <person name="Crabtree J."/>
            <person name="Deschamps S."/>
            <person name="Do A."/>
            <person name="Do T."/>
            <person name="Dorman A."/>
            <person name="Fang F."/>
            <person name="Fu Y."/>
            <person name="Hu P."/>
            <person name="Hua A."/>
            <person name="Kenton S."/>
            <person name="Lai H."/>
            <person name="Lao H.I."/>
            <person name="Lewis J."/>
            <person name="Lewis S."/>
            <person name="Lin S.-P."/>
            <person name="Loh P."/>
            <person name="Malaj E."/>
            <person name="Nguyen T."/>
            <person name="Pan H."/>
            <person name="Phan S."/>
            <person name="Qi S."/>
            <person name="Qian Y."/>
            <person name="Ray L."/>
            <person name="Ren Q."/>
            <person name="Shaull S."/>
            <person name="Sloan D."/>
            <person name="Song L."/>
            <person name="Wang Q."/>
            <person name="Wang Y."/>
            <person name="Wang Z."/>
            <person name="White J."/>
            <person name="Willingham D."/>
            <person name="Wu H."/>
            <person name="Yao Z."/>
            <person name="Zhan M."/>
            <person name="Zhang G."/>
            <person name="Chissoe S."/>
            <person name="Murray J."/>
            <person name="Miller N."/>
            <person name="Minx P."/>
            <person name="Fulton R."/>
            <person name="Johnson D."/>
            <person name="Bemis G."/>
            <person name="Bentley D."/>
            <person name="Bradshaw H."/>
            <person name="Bourne S."/>
            <person name="Cordes M."/>
            <person name="Du Z."/>
            <person name="Fulton L."/>
            <person name="Goela D."/>
            <person name="Graves T."/>
            <person name="Hawkins J."/>
            <person name="Hinds K."/>
            <person name="Kemp K."/>
            <person name="Latreille P."/>
            <person name="Layman D."/>
            <person name="Ozersky P."/>
            <person name="Rohlfing T."/>
            <person name="Scheet P."/>
            <person name="Walker C."/>
            <person name="Wamsley A."/>
            <person name="Wohldmann P."/>
            <person name="Pepin K."/>
            <person name="Nelson J."/>
            <person name="Korf I."/>
            <person name="Bedell J.A."/>
            <person name="Hillier L.W."/>
            <person name="Mardis E."/>
            <person name="Waterston R."/>
            <person name="Wilson R."/>
            <person name="Emanuel B.S."/>
            <person name="Shaikh T."/>
            <person name="Kurahashi H."/>
            <person name="Saitta S."/>
            <person name="Budarf M.L."/>
            <person name="McDermid H.E."/>
            <person name="Johnson A."/>
            <person name="Wong A.C.C."/>
            <person name="Morrow B.E."/>
            <person name="Edelmann L."/>
            <person name="Kim U.J."/>
            <person name="Shizuya H."/>
            <person name="Simon M.I."/>
            <person name="Dumanski J.P."/>
            <person name="Peyrard M."/>
            <person name="Kedra D."/>
            <person name="Seroussi E."/>
            <person name="Fransson I."/>
            <person name="Tapia I."/>
            <person name="Bruder C.E."/>
            <person name="O'Brien K.P."/>
            <person name="Wilkinson P."/>
            <person name="Bodenteich A."/>
            <person name="Hartman K."/>
            <person name="Hu X."/>
            <person name="Khan A.S."/>
            <person name="Lane L."/>
            <person name="Tilahun Y."/>
            <person name="Wright H."/>
        </authorList>
    </citation>
    <scope>NUCLEOTIDE SEQUENCE [LARGE SCALE GENOMIC DNA]</scope>
</reference>
<reference key="5">
    <citation type="submission" date="2005-07" db="EMBL/GenBank/DDBJ databases">
        <authorList>
            <person name="Mural R.J."/>
            <person name="Istrail S."/>
            <person name="Sutton G.G."/>
            <person name="Florea L."/>
            <person name="Halpern A.L."/>
            <person name="Mobarry C.M."/>
            <person name="Lippert R."/>
            <person name="Walenz B."/>
            <person name="Shatkay H."/>
            <person name="Dew I."/>
            <person name="Miller J.R."/>
            <person name="Flanigan M.J."/>
            <person name="Edwards N.J."/>
            <person name="Bolanos R."/>
            <person name="Fasulo D."/>
            <person name="Halldorsson B.V."/>
            <person name="Hannenhalli S."/>
            <person name="Turner R."/>
            <person name="Yooseph S."/>
            <person name="Lu F."/>
            <person name="Nusskern D.R."/>
            <person name="Shue B.C."/>
            <person name="Zheng X.H."/>
            <person name="Zhong F."/>
            <person name="Delcher A.L."/>
            <person name="Huson D.H."/>
            <person name="Kravitz S.A."/>
            <person name="Mouchard L."/>
            <person name="Reinert K."/>
            <person name="Remington K.A."/>
            <person name="Clark A.G."/>
            <person name="Waterman M.S."/>
            <person name="Eichler E.E."/>
            <person name="Adams M.D."/>
            <person name="Hunkapiller M.W."/>
            <person name="Myers E.W."/>
            <person name="Venter J.C."/>
        </authorList>
    </citation>
    <scope>NUCLEOTIDE SEQUENCE [LARGE SCALE GENOMIC DNA]</scope>
</reference>
<reference key="6">
    <citation type="journal article" date="2004" name="Genome Res.">
        <title>The status, quality, and expansion of the NIH full-length cDNA project: the Mammalian Gene Collection (MGC).</title>
        <authorList>
            <consortium name="The MGC Project Team"/>
        </authorList>
    </citation>
    <scope>NUCLEOTIDE SEQUENCE [LARGE SCALE MRNA] (ISOFORMS 1; 2 AND 10)</scope>
    <source>
        <tissue>Placenta</tissue>
        <tissue>Testis</tissue>
    </source>
</reference>
<reference key="7">
    <citation type="journal article" date="2007" name="BMC Genomics">
        <title>The full-ORF clone resource of the German cDNA consortium.</title>
        <authorList>
            <person name="Bechtel S."/>
            <person name="Rosenfelder H."/>
            <person name="Duda A."/>
            <person name="Schmidt C.P."/>
            <person name="Ernst U."/>
            <person name="Wellenreuther R."/>
            <person name="Mehrle A."/>
            <person name="Schuster C."/>
            <person name="Bahr A."/>
            <person name="Bloecker H."/>
            <person name="Heubner D."/>
            <person name="Hoerlein A."/>
            <person name="Michel G."/>
            <person name="Wedler H."/>
            <person name="Koehrer K."/>
            <person name="Ottenwaelder B."/>
            <person name="Poustka A."/>
            <person name="Wiemann S."/>
            <person name="Schupp I."/>
        </authorList>
    </citation>
    <scope>NUCLEOTIDE SEQUENCE [LARGE SCALE MRNA] OF 571-1603 (ISOFORM 6)</scope>
    <scope>NUCLEOTIDE SEQUENCE [LARGE SCALE MRNA] OF 604-1603 (ISOFORM 9)</scope>
    <source>
        <tissue>Fetal brain</tissue>
    </source>
</reference>
<reference key="8">
    <citation type="journal article" date="2008" name="Proc. Natl. Acad. Sci. U.S.A.">
        <title>A quantitative atlas of mitotic phosphorylation.</title>
        <authorList>
            <person name="Dephoure N."/>
            <person name="Zhou C."/>
            <person name="Villen J."/>
            <person name="Beausoleil S.A."/>
            <person name="Bakalarski C.E."/>
            <person name="Elledge S.J."/>
            <person name="Gygi S.P."/>
        </authorList>
    </citation>
    <scope>IDENTIFICATION BY MASS SPECTROMETRY [LARGE SCALE ANALYSIS]</scope>
    <source>
        <tissue>Cervix carcinoma</tissue>
    </source>
</reference>
<reference key="9">
    <citation type="journal article" date="2013" name="Science">
        <title>A Tumor suppressor complex with GAP activity for the Rag GTPases that signal amino acid sufficiency to mTORC1.</title>
        <authorList>
            <person name="Bar-Peled L."/>
            <person name="Chantranupong L."/>
            <person name="Cherniack A.D."/>
            <person name="Chen W.W."/>
            <person name="Ottina K.A."/>
            <person name="Grabiner B.C."/>
            <person name="Spear E.D."/>
            <person name="Carter S.L."/>
            <person name="Meyerson M."/>
            <person name="Sabatini D.M."/>
        </authorList>
    </citation>
    <scope>FUNCTION</scope>
    <scope>IDENTIFICATION IN GATOR COMPLEX</scope>
    <scope>SUBUNIT</scope>
</reference>
<reference key="10">
    <citation type="journal article" date="2014" name="Cell Rep.">
        <title>Sestrins inhibit mTORC1 kinase activation through the GATOR complex.</title>
        <authorList>
            <person name="Parmigiani A."/>
            <person name="Nourbakhsh A."/>
            <person name="Ding B."/>
            <person name="Wang W."/>
            <person name="Kim Y.C."/>
            <person name="Akopiants K."/>
            <person name="Guan K.L."/>
            <person name="Karin M."/>
            <person name="Budanov A.V."/>
        </authorList>
    </citation>
    <scope>FUNCTION</scope>
</reference>
<reference key="11">
    <citation type="journal article" date="2014" name="J. Proteomics">
        <title>An enzyme assisted RP-RPLC approach for in-depth analysis of human liver phosphoproteome.</title>
        <authorList>
            <person name="Bian Y."/>
            <person name="Song C."/>
            <person name="Cheng K."/>
            <person name="Dong M."/>
            <person name="Wang F."/>
            <person name="Huang J."/>
            <person name="Sun D."/>
            <person name="Wang L."/>
            <person name="Ye M."/>
            <person name="Zou H."/>
        </authorList>
    </citation>
    <scope>PHOSPHORYLATION [LARGE SCALE ANALYSIS] AT SER-505</scope>
    <scope>IDENTIFICATION BY MASS SPECTROMETRY [LARGE SCALE ANALYSIS]</scope>
    <source>
        <tissue>Liver</tissue>
    </source>
</reference>
<reference key="12">
    <citation type="journal article" date="2017" name="Nature">
        <title>KICSTOR recruits GATOR1 to the lysosome and is necessary for nutrients to regulate mTORC1.</title>
        <authorList>
            <person name="Wolfson R.L."/>
            <person name="Chantranupong L."/>
            <person name="Wyant G.A."/>
            <person name="Gu X."/>
            <person name="Orozco J.M."/>
            <person name="Shen K."/>
            <person name="Condon K.J."/>
            <person name="Petri S."/>
            <person name="Kedir J."/>
            <person name="Scaria S.M."/>
            <person name="Abu-Remaileh M."/>
            <person name="Frankel W.N."/>
            <person name="Sabatini D.M."/>
        </authorList>
    </citation>
    <scope>SUBCELLULAR LOCATION</scope>
</reference>
<reference key="13">
    <citation type="journal article" date="2018" name="Nature">
        <title>KLHL22 activates amino-acid-dependent mTORC1 signalling to promote tumorigenesis and ageing.</title>
        <authorList>
            <person name="Chen J."/>
            <person name="Ou Y."/>
            <person name="Yang Y."/>
            <person name="Li W."/>
            <person name="Xu Y."/>
            <person name="Xie Y."/>
            <person name="Liu Y."/>
        </authorList>
    </citation>
    <scope>FUNCTION</scope>
    <scope>DOMAIN</scope>
    <scope>UBIQUITINATION BY KLHL22</scope>
    <scope>MUTAGENESIS OF LYS-447; LYS-710; LYS-1065; LYS-1088; SER-1188; THR-1189; SER-1195; SER-1201; TYR-1203; SER-1207; THR-1223; THR-1241; SER-1244; THR-1250; TYR-1253; TYR-1256 AND LYS-1574</scope>
</reference>
<reference key="14">
    <citation type="journal article" date="2019" name="Proc. Natl. Acad. Sci. U.S.A.">
        <title>Phosphorylation of DEPDC5, a component of the GATOR1 complex, releases inhibition of mTORC1 and promotes tumor growth.</title>
        <authorList>
            <person name="Padi S.K.R."/>
            <person name="Singh N."/>
            <person name="Bearss J.J."/>
            <person name="Olive V."/>
            <person name="Song J.H."/>
            <person name="Cardo-Vila M."/>
            <person name="Kraft A.S."/>
            <person name="Okumura K."/>
        </authorList>
    </citation>
    <scope>FUNCTION</scope>
    <scope>PHOSPHORYLATION AT SER-1002 AND SER-1530</scope>
    <scope>MUTAGENESIS OF SER-1002 AND SER-1530</scope>
</reference>
<reference evidence="27 28" key="15">
    <citation type="journal article" date="2018" name="Nature">
        <title>Architecture of the human GATOR1 and GATOR1-Rag GTPases complexes.</title>
        <authorList>
            <person name="Shen K."/>
            <person name="Huang R.K."/>
            <person name="Brignole E.J."/>
            <person name="Condon K.J."/>
            <person name="Valenstein M.L."/>
            <person name="Chantranupong L."/>
            <person name="Bomaliyamu A."/>
            <person name="Choe A."/>
            <person name="Hong C."/>
            <person name="Yu Z."/>
            <person name="Sabatini D.M."/>
        </authorList>
    </citation>
    <scope>STRUCTURE BY ELECTRON MICROSCOPY (4.00 ANGSTROMS) IN COMPLEX WITH RRAGA; RRAGC; NPRL2 AND NPRL3</scope>
    <scope>FUNCTION</scope>
    <scope>IDENTIFICATION IN GATOR1 COMPLEX</scope>
    <scope>INTERACTION WITH SAMTOR</scope>
    <scope>MUTAGENESIS OF 185-ASP--ASP-189; 371-GLU--HIS-375; 775-TYR--PRO-779 AND TYR-775</scope>
</reference>
<reference evidence="29 30 31" key="16">
    <citation type="journal article" date="2022" name="Mol. Cell">
        <title>Cryo-EM structures of the human GATOR1-Rag-Ragulator complex reveal a spatial-constraint regulated GAP mechanism.</title>
        <authorList>
            <person name="Egri S.B."/>
            <person name="Ouch C."/>
            <person name="Chou H.T."/>
            <person name="Yu Z."/>
            <person name="Song K."/>
            <person name="Xu C."/>
            <person name="Shen K."/>
        </authorList>
    </citation>
    <scope>STRUCTURE BY ELECTRON MICROSCOPY (3.90 ANGSTROMS) IN COMPLEX WITH RRAGA; RRAGC; NPRL2; NPRL3; LAMTOR1; LAMTOR2; LAMTOR3; LAMTOR4 AND LAMTOR5</scope>
    <scope>FUNCTION</scope>
    <scope>IDENTIFICATION IN GATOR1 COMPLEX</scope>
    <scope>MUTAGENESIS OF TYR-775</scope>
</reference>
<reference key="17">
    <citation type="journal article" date="2016" name="Ann. Neurol.">
        <title>Mutations in the mammalian target of rapamycin pathway regulators NPRL2 and NPRL3 cause focal epilepsy.</title>
        <authorList>
            <consortium name="Epilepsy Electroclinical Study Group"/>
            <person name="Ricos M.G."/>
            <person name="Hodgson B.L."/>
            <person name="Pippucci T."/>
            <person name="Saidin A."/>
            <person name="Ong Y.S."/>
            <person name="Heron S.E."/>
            <person name="Licchetta L."/>
            <person name="Bisulli F."/>
            <person name="Bayly M.A."/>
            <person name="Hughes J."/>
            <person name="Baldassari S."/>
            <person name="Palombo F."/>
            <person name="Santucci M."/>
            <person name="Meletti S."/>
            <person name="Berkovic S.F."/>
            <person name="Rubboli G."/>
            <person name="Thomas P.Q."/>
            <person name="Scheffer I.E."/>
            <person name="Tinuper P."/>
            <person name="Geoghegan J."/>
            <person name="Schreiber A.W."/>
            <person name="Dibbens L.M."/>
        </authorList>
    </citation>
    <scope>INVOLVEMENT IN FFEVF1</scope>
    <scope>VARIANTS FFEVF1 ASP-214; PRO-542; PRO-1081; PHE-1154 AND GLN-1268</scope>
</reference>
<reference key="18">
    <citation type="journal article" date="2016" name="Epilepsia">
        <title>Involvement of GATOR complex genes in familial focal epilepsies and focal cortical dysplasia.</title>
        <authorList>
            <person name="Weckhuysen S."/>
            <person name="Marsan E."/>
            <person name="Lambrecq V."/>
            <person name="Marchal C."/>
            <person name="Morin-Brureau M."/>
            <person name="An-Gourfinkel I."/>
            <person name="Baulac M."/>
            <person name="Fohlen M."/>
            <person name="Kallay Zetchi C."/>
            <person name="Seeck M."/>
            <person name="de la Grange P."/>
            <person name="Dermaut B."/>
            <person name="Meurs A."/>
            <person name="Thomas P."/>
            <person name="Chassoux F."/>
            <person name="Leguern E."/>
            <person name="Picard F."/>
            <person name="Baulac S."/>
        </authorList>
    </citation>
    <scope>INVOLVEMENT IN FFEVF1</scope>
    <scope>VARIANT FFEVF1 ARG-1065</scope>
</reference>
<reference key="19">
    <citation type="journal article" date="2013" name="Nat. Genet.">
        <title>Mutations in DEPDC5 cause familial focal epilepsy with variable foci.</title>
        <authorList>
            <person name="Dibbens L.M."/>
            <person name="de Vries B."/>
            <person name="Donatello S."/>
            <person name="Heron S.E."/>
            <person name="Hodgson B.L."/>
            <person name="Chintawar S."/>
            <person name="Crompton D.E."/>
            <person name="Hughes J.N."/>
            <person name="Bellows S.T."/>
            <person name="Klein K.M."/>
            <person name="Callenbach P.M."/>
            <person name="Corbett M.A."/>
            <person name="Gardner A.E."/>
            <person name="Kivity S."/>
            <person name="Iona X."/>
            <person name="Regan B.M."/>
            <person name="Weller C.M."/>
            <person name="Crimmins D."/>
            <person name="O'Brien T.J."/>
            <person name="Guerrero-Lopez R."/>
            <person name="Mulley J.C."/>
            <person name="Dubeau F."/>
            <person name="Licchetta L."/>
            <person name="Bisulli F."/>
            <person name="Cossette P."/>
            <person name="Thomas P.Q."/>
            <person name="Gecz J."/>
            <person name="Serratosa J."/>
            <person name="Brouwer O.F."/>
            <person name="Andermann F."/>
            <person name="Andermann E."/>
            <person name="van den Maagdenberg A.M."/>
            <person name="Pandolfo M."/>
            <person name="Berkovic S.F."/>
            <person name="Scheffer I.E."/>
        </authorList>
    </citation>
    <scope>VARIANTS FFEVF1 VAL-452; ARG-1073 AND LEU-1104</scope>
    <scope>INVOLVEMENT IN FFEVF1</scope>
</reference>
<reference key="20">
    <citation type="journal article" date="2013" name="Nat. Genet.">
        <title>Mutations of DEPDC5 cause autosomal dominant focal epilepsies.</title>
        <authorList>
            <person name="Ishida S."/>
            <person name="Picard F."/>
            <person name="Rudolf G."/>
            <person name="Noe E."/>
            <person name="Achaz G."/>
            <person name="Thomas P."/>
            <person name="Genton P."/>
            <person name="Mundwiller E."/>
            <person name="Wolff M."/>
            <person name="Marescaux C."/>
            <person name="Miles R."/>
            <person name="Baulac M."/>
            <person name="Hirsch E."/>
            <person name="Leguern E."/>
            <person name="Baulac S."/>
        </authorList>
    </citation>
    <scope>VARIANT FFEVF1 GLN-485</scope>
    <scope>TISSUE SPECIFICITY</scope>
</reference>
<reference key="21">
    <citation type="journal article" date="2014" name="Ann. Neurol.">
        <title>DEPDC5 mutations in genetic focal epilepsies of childhood.</title>
        <authorList>
            <person name="Lal D."/>
            <person name="Reinthaler E.M."/>
            <person name="Schubert J."/>
            <person name="Muhle H."/>
            <person name="Riesch E."/>
            <person name="Kluger G."/>
            <person name="Jabbari K."/>
            <person name="Kawalia A."/>
            <person name="Baumel C."/>
            <person name="Holthausen H."/>
            <person name="Hahn A."/>
            <person name="Feucht M."/>
            <person name="Neophytou B."/>
            <person name="Haberlandt E."/>
            <person name="Becker F."/>
            <person name="Altmuller J."/>
            <person name="Thiele H."/>
            <person name="Lemke J.R."/>
            <person name="Lerche H."/>
            <person name="Nurnberg P."/>
            <person name="Sander T."/>
            <person name="Weber Y."/>
            <person name="Zimprich F."/>
            <person name="Neubauer B.A."/>
        </authorList>
    </citation>
    <scope>VARIANTS FFEVF1 ILE-90 AND LEU-272</scope>
</reference>
<reference key="22">
    <citation type="journal article" date="2014" name="Clin. Genet.">
        <title>A recurrent mutation in DEPDC5 predisposes to focal epilepsies in the French-Canadian population.</title>
        <authorList>
            <person name="Martin C."/>
            <person name="Meloche C."/>
            <person name="Rioux M.F."/>
            <person name="Nguyen D.K."/>
            <person name="Carmant L."/>
            <person name="Andermann E."/>
            <person name="Gravel M."/>
            <person name="Cossette P."/>
        </authorList>
    </citation>
    <scope>VARIANT FFEVF1 MET-864</scope>
</reference>
<reference key="23">
    <citation type="journal article" date="2015" name="Hum. Mutat.">
        <title>Preliminary functional assessment and classification of DEPDC5 variants associated with focal epilepsy.</title>
        <authorList>
            <person name="van Kranenburg M."/>
            <person name="Hoogeveen-Westerveld M."/>
            <person name="Nellist M."/>
        </authorList>
    </citation>
    <scope>VARIANTS FFEVF1 ILE-90; LEU-272; VAL-452; GLN-485; MET-864; ARG-1073 AND GLY-1162</scope>
    <scope>CHARACTERIZATION OF VARIANTS FFEVF1 ILE-90; LEU-272; VAL-452; GLN-485; MET-864; ARG-1073 AND GLY-1162</scope>
    <scope>IDENTIFICATION IN GATOR COMPLEX</scope>
</reference>
<reference key="24">
    <citation type="journal article" date="2023" name="Hum. Mol. Genet.">
        <title>Germline homozygous missense DEPDC5 variants cause severe refractory early-onset epilepsy, macrocephaly and bilateral polymicrogyria.</title>
        <authorList>
            <consortium name="Genomics England Research Consortium"/>
            <consortium name="Ponnudas (Prab) Prabhakar"/>
            <person name="Ververi A."/>
            <person name="Zagaglia S."/>
            <person name="Menzies L."/>
            <person name="Baptista J."/>
            <person name="Caswell R."/>
            <person name="Baulac S."/>
            <person name="Ellard S."/>
            <person name="Lynch S."/>
            <person name="Jacques T.S."/>
            <person name="Chawla M.S."/>
            <person name="Heier M."/>
            <person name="Kulseth M.A."/>
            <person name="Mero I.L."/>
            <person name="Vaatevik A.K."/>
            <person name="Kraoua I."/>
            <person name="Ben Rhouma H."/>
            <person name="Ben Younes T."/>
            <person name="Miladi Z."/>
            <person name="Ben Youssef Turki I."/>
            <person name="Jones W.D."/>
            <person name="Clement E."/>
            <person name="Eltze C."/>
            <person name="Mankad K."/>
            <person name="Merve A."/>
            <person name="Parker J."/>
            <person name="Hoskins B."/>
            <person name="Pressler R."/>
            <person name="Sudhakar S."/>
            <person name="DeVile C."/>
            <person name="Homfray T."/>
            <person name="Kaliakatsos M."/>
            <person name="Robinson R."/>
            <person name="Keim S.M.B."/>
            <person name="Habibi I."/>
            <person name="Reymond A."/>
            <person name="Sisodiya S.M."/>
            <person name="Hurst J.A."/>
        </authorList>
    </citation>
    <scope>VARIANTS DEE111 ARG-337 AND CYS-806</scope>
    <scope>INVOLVEMENT IN DEE111</scope>
</reference>
<feature type="chain" id="PRO_0000079865" description="GATOR1 complex protein DEPDC5">
    <location>
        <begin position="1"/>
        <end position="1603"/>
    </location>
</feature>
<feature type="domain" description="DEP" evidence="2">
    <location>
        <begin position="1187"/>
        <end position="1262"/>
    </location>
</feature>
<feature type="region of interest" description="Disordered" evidence="3">
    <location>
        <begin position="427"/>
        <end position="450"/>
    </location>
</feature>
<feature type="region of interest" description="Disordered" evidence="3">
    <location>
        <begin position="484"/>
        <end position="527"/>
    </location>
</feature>
<feature type="region of interest" description="Disordered" evidence="3">
    <location>
        <begin position="696"/>
        <end position="720"/>
    </location>
</feature>
<feature type="region of interest" description="Disordered" evidence="3">
    <location>
        <begin position="1135"/>
        <end position="1165"/>
    </location>
</feature>
<feature type="compositionally biased region" description="Basic and acidic residues" evidence="3">
    <location>
        <begin position="430"/>
        <end position="439"/>
    </location>
</feature>
<feature type="compositionally biased region" description="Low complexity" evidence="3">
    <location>
        <begin position="494"/>
        <end position="508"/>
    </location>
</feature>
<feature type="compositionally biased region" description="Polar residues" evidence="3">
    <location>
        <begin position="518"/>
        <end position="527"/>
    </location>
</feature>
<feature type="compositionally biased region" description="Polar residues" evidence="3">
    <location>
        <begin position="696"/>
        <end position="707"/>
    </location>
</feature>
<feature type="compositionally biased region" description="Polar residues" evidence="3">
    <location>
        <begin position="1135"/>
        <end position="1153"/>
    </location>
</feature>
<feature type="compositionally biased region" description="Low complexity" evidence="3">
    <location>
        <begin position="1154"/>
        <end position="1165"/>
    </location>
</feature>
<feature type="modified residue" description="Phosphoserine" evidence="32">
    <location>
        <position position="505"/>
    </location>
</feature>
<feature type="modified residue" description="Phosphoserine; by PIM1" evidence="16">
    <location>
        <position position="1002"/>
    </location>
</feature>
<feature type="modified residue" description="Phosphoserine; by PKB/AKT1 and PIM1" evidence="16">
    <location>
        <position position="1530"/>
    </location>
</feature>
<feature type="splice variant" id="VSP_014933" description="In isoform 2." evidence="20">
    <original>DVLE</original>
    <variation>EHLG</variation>
    <location>
        <begin position="556"/>
        <end position="559"/>
    </location>
</feature>
<feature type="splice variant" id="VSP_014934" description="In isoform 2." evidence="20">
    <location>
        <begin position="560"/>
        <end position="1603"/>
    </location>
</feature>
<feature type="splice variant" id="VSP_014936" description="In isoform 6 and isoform 8." evidence="19 22">
    <location>
        <begin position="624"/>
        <end position="701"/>
    </location>
</feature>
<feature type="splice variant" id="VSP_014937" description="In isoform 1 and isoform 9." evidence="20 21 22 24">
    <original>ILTLSAPPVV</original>
    <variation>M</variation>
    <location>
        <begin position="724"/>
        <end position="733"/>
    </location>
</feature>
<feature type="splice variant" id="VSP_014938" description="In isoform 1, isoform 4 and isoform 8." evidence="19 20 21 24">
    <location>
        <begin position="1089"/>
        <end position="1110"/>
    </location>
</feature>
<feature type="splice variant" id="VSP_014939" description="In isoform 6." evidence="22">
    <original>IMQKMLEEQLITHASGEAWRTFIYGFYFYKIVTDKEPDRVAMQQPATTWHTAGVDDFASFQRKWFEVAFVAEELVHSEIPAFLLPWLPSRPASYASRHSSFSRSFGGRS</original>
    <variation>VMQWPCSSPPPPGTQQEWTTSPASSASGLRWPLWQKSSCTLRFLPFSCPGCLTGQPPMQVGTAPLAEVLEDGARRQHF</variation>
    <location>
        <begin position="1230"/>
        <end position="1338"/>
    </location>
</feature>
<feature type="splice variant" id="VSP_014940" description="In isoform 6." evidence="22">
    <location>
        <begin position="1339"/>
        <end position="1603"/>
    </location>
</feature>
<feature type="splice variant" id="VSP_014941" description="In isoform 5." evidence="25">
    <original>FEPETYWDRMHLFQEAIAHRFGFVQDKYSASAFNFPAENKPQYIHVTGTVFLQLPYSKRKFSGQQRRRRNSTSSTNQNMFCEERVGYNWAYNTMLTKTWRSSATGDEKFADRLLKDFTDFCINRDNRLVTFWTSCLEKMHASAP</original>
    <variation>LGLYKINILPLLLTSLLRTSLSISTLQEQCFCSCPTPSASSQGSSGGGGTPPAPPTRTCSARSGSATTGPTTPCSPKHGAPAPQGMKSLLIGC</variation>
    <location>
        <begin position="1460"/>
        <end position="1603"/>
    </location>
</feature>
<feature type="sequence variant" id="VAR_072363" description="In FFEVF1; does not inhibit DEPDC5 signaling; does not change kinase activity of mTORC1; does not change association with the GATOR complex; inhibits slightly RRAGA/RRAGC and RRAGB/RRAGC heterodimer formation; dbSNP:rs768456731." evidence="8 9">
    <original>V</original>
    <variation>I</variation>
    <location>
        <position position="90"/>
    </location>
</feature>
<feature type="sequence variant" id="VAR_077128" description="In FFEVF1; uncertain significance; dbSNP:rs886039276." evidence="11">
    <original>H</original>
    <variation>D</variation>
    <location>
        <position position="214"/>
    </location>
</feature>
<feature type="sequence variant" id="VAR_072364" description="In FFEVF1; does not inhibit DEPDC5 signaling; does not change kinase activity of mTORC1; does not change association with the GATOR complex; does not change RRAGA/RRAGC and RRAGB/RRAGC heterodimer formation; dbSNP:rs187334123." evidence="8 9">
    <original>V</original>
    <variation>L</variation>
    <location>
        <position position="272"/>
    </location>
</feature>
<feature type="sequence variant" id="VAR_088988" description="In DEE111; likely pathogenic." evidence="18">
    <original>T</original>
    <variation>R</variation>
    <location>
        <position position="337"/>
    </location>
</feature>
<feature type="sequence variant" id="VAR_069263" description="In FFEVF1; inhibits slightly DEPDC5 signaling; stimulates slightly kinase activity of mTORC1; does not change association with the GATOR complex; does not change RRAGA/RRAGC and RRAGB/RRAGC heterodimer formation; dbSNP:rs202226316." evidence="4 9">
    <original>A</original>
    <variation>V</variation>
    <location>
        <position position="452"/>
    </location>
</feature>
<feature type="sequence variant" id="VAR_069264" description="In FFEVF1; does not inhibit DEPDC5 signaling; stimulates slightly kinase activity of mTORC1; does not change association with the GATOR complex; does not change RRAGA/RRAGC and RRAGB/RRAGC heterodimer formation; dbSNP:rs886039278." evidence="5 9">
    <original>R</original>
    <variation>Q</variation>
    <location>
        <position position="485"/>
    </location>
</feature>
<feature type="sequence variant" id="VAR_024338" description="In dbSNP:rs8138516.">
    <original>S</original>
    <variation>T</variation>
    <location>
        <position position="491"/>
    </location>
</feature>
<feature type="sequence variant" id="VAR_077129" description="In FFEVF1; uncertain significance; dbSNP:rs886039279." evidence="11">
    <original>Q</original>
    <variation>P</variation>
    <location>
        <position position="542"/>
    </location>
</feature>
<feature type="sequence variant" id="VAR_053953" description="In dbSNP:rs16989528.">
    <original>A</original>
    <variation>V</variation>
    <location>
        <position position="641"/>
    </location>
</feature>
<feature type="sequence variant" id="VAR_053954" description="In dbSNP:rs16989535.">
    <original>S</original>
    <variation>F</variation>
    <location>
        <position position="712"/>
    </location>
</feature>
<feature type="sequence variant" id="VAR_088989" description="In DEE111; likely pathogenic." evidence="18">
    <original>R</original>
    <variation>C</variation>
    <location>
        <position position="806"/>
    </location>
</feature>
<feature type="sequence variant" id="VAR_072365" description="In FFEVF1; inhibits slightly DEPDC5 signaling; does not change kinase activity of mTORC1; does not change association with the GATOR complex; does not change RRAGA/RRAGC and RRAGB/RRAGC heterodimer formation; dbSNP:rs564667614." evidence="7 9">
    <original>T</original>
    <variation>M</variation>
    <location>
        <position position="864"/>
    </location>
</feature>
<feature type="sequence variant" id="VAR_077130" description="In FFEVF1; uncertain significance; dbSNP:rs757609394." evidence="12">
    <original>K</original>
    <variation>R</variation>
    <location>
        <position position="1065"/>
    </location>
</feature>
<feature type="sequence variant" id="VAR_069265" description="In FFEVF1; inhibits slightly DEPDC5 signaling; does not change kinase activity of mTORC1; does not change association with the GATOR complex; does not change RRAGA/RRAGC and RRAGB/RRAGC heterodimer formation; dbSNP:rs754608531." evidence="4 9">
    <original>S</original>
    <variation>R</variation>
    <location>
        <position position="1073"/>
    </location>
</feature>
<feature type="sequence variant" id="VAR_077131" description="In FFEVF1; uncertain significance; dbSNP:rs142540948." evidence="11">
    <original>T</original>
    <variation>P</variation>
    <location>
        <position position="1081"/>
    </location>
</feature>
<feature type="sequence variant" id="VAR_069266" description="In FFEVF1; uncertain significance; dbSNP:rs79027628." evidence="4">
    <original>S</original>
    <variation>L</variation>
    <location>
        <position position="1104"/>
    </location>
</feature>
<feature type="sequence variant" id="VAR_077132" description="In FFEVF1; uncertain significance; dbSNP:rs578244490." evidence="11">
    <original>S</original>
    <variation>F</variation>
    <location>
        <position position="1154"/>
    </location>
</feature>
<feature type="sequence variant" id="VAR_072366" description="In FFEVF1; does not inhibit DEPDC5 signaling; does not change kinase activity of mTORC1; does not change association with the GATOR complex; does not change RRAGA/RRAGC and RRAGB/RRAGC heterodimer formation; dbSNP:rs886039280." evidence="9">
    <original>S</original>
    <variation>G</variation>
    <location>
        <position position="1162"/>
    </location>
</feature>
<feature type="sequence variant" id="VAR_077133" description="In FFEVF1; uncertain significance; dbSNP:rs886039281." evidence="11">
    <original>R</original>
    <variation>Q</variation>
    <location>
        <position position="1268"/>
    </location>
</feature>
<feature type="mutagenesis site" description="In mutant AB; abolished interaction with NPRL2 and NPRL3; when associated with 371-G--G-375." evidence="14">
    <original>DIYGD</original>
    <variation>GSGSG</variation>
    <location>
        <begin position="185"/>
        <end position="189"/>
    </location>
</feature>
<feature type="mutagenesis site" description="In mutant AB; abolished interaction with NPRL2 and NPRL3; when associated with 185-G--G-189." evidence="14">
    <original>EQPLH</original>
    <variation>GSGSG</variation>
    <location>
        <begin position="371"/>
        <end position="375"/>
    </location>
</feature>
<feature type="mutagenesis site" description="No effect on ubiquitination. Loss of interaction with KLHL22 and ubiquitination; when associated with R-710, R-1065, R-1088 and R-1574." evidence="15">
    <original>K</original>
    <variation>R</variation>
    <location>
        <position position="447"/>
    </location>
</feature>
<feature type="mutagenesis site" description="No effect on ubiquitination. Loss of interaction with KLHL22 and ubiquitination; when associated with R-447, R-1065, R-1088 and R-1574." evidence="15">
    <original>K</original>
    <variation>R</variation>
    <location>
        <position position="710"/>
    </location>
</feature>
<feature type="mutagenesis site" description="In mutant P; strongly decreased interaction with RagA/RRAGA." evidence="14">
    <original>YDLLP</original>
    <variation>GSGSG</variation>
    <location>
        <begin position="775"/>
        <end position="779"/>
    </location>
</feature>
<feature type="mutagenesis site" description="Strongly decreased interaction with RagA/RRAGA." evidence="14 17">
    <original>Y</original>
    <variation>A</variation>
    <location>
        <position position="775"/>
    </location>
</feature>
<feature type="mutagenesis site" description="Abolished phosphorylation by PIM1; when associated with A-1530." evidence="16">
    <original>S</original>
    <variation>A</variation>
    <location>
        <position position="1002"/>
    </location>
</feature>
<feature type="mutagenesis site" description="No effect on ubiquitination. Loss of interaction with KLHL22 and ubiquitination; when associated with R-447, R-710, R-1088 and R-1574." evidence="15">
    <original>K</original>
    <variation>R</variation>
    <location>
        <position position="1065"/>
    </location>
</feature>
<feature type="mutagenesis site" description="No effect on ubiquitination. Loss of interaction with KLHL22 and ubiquitination; when associated with R-447, R-710, R-1065 and R-1574." evidence="15">
    <original>K</original>
    <variation>R</variation>
    <location>
        <position position="1088"/>
    </location>
</feature>
<feature type="mutagenesis site" description="No effect on interaction with KLHL22." evidence="15">
    <original>S</original>
    <variation>A</variation>
    <location>
        <position position="1188"/>
    </location>
</feature>
<feature type="mutagenesis site" description="No effect on interaction with KLHL22." evidence="15">
    <original>T</original>
    <variation>A</variation>
    <location>
        <position position="1189"/>
    </location>
</feature>
<feature type="mutagenesis site" description="No effect on interaction with KLHL22." evidence="15">
    <original>S</original>
    <variation>A</variation>
    <location>
        <position position="1195"/>
    </location>
</feature>
<feature type="mutagenesis site" description="No effect on interaction with KLHL22." evidence="15">
    <original>S</original>
    <variation>A</variation>
    <location>
        <position position="1201"/>
    </location>
</feature>
<feature type="mutagenesis site" description="No effect on interaction with KLHL22." evidence="15">
    <original>Y</original>
    <variation>A</variation>
    <location>
        <position position="1203"/>
    </location>
</feature>
<feature type="mutagenesis site" description="No effect on interaction with KLHL22." evidence="15">
    <original>S</original>
    <variation>A</variation>
    <location>
        <position position="1207"/>
    </location>
</feature>
<feature type="mutagenesis site" description="No effect on interaction with KLHL22." evidence="15">
    <original>T</original>
    <variation>A</variation>
    <location>
        <position position="1223"/>
    </location>
</feature>
<feature type="mutagenesis site" description="No effect on interaction with KLHL22." evidence="15">
    <original>T</original>
    <variation>A</variation>
    <location>
        <position position="1241"/>
    </location>
</feature>
<feature type="mutagenesis site" description="No effect on interaction with KLHL22." evidence="15">
    <original>S</original>
    <variation>A</variation>
    <location>
        <position position="1244"/>
    </location>
</feature>
<feature type="mutagenesis site" description="No effect on interaction with KLHL22." evidence="15">
    <original>T</original>
    <variation>A</variation>
    <location>
        <position position="1250"/>
    </location>
</feature>
<feature type="mutagenesis site" description="No effect on interaction with KLHL22." evidence="15">
    <original>Y</original>
    <variation>A</variation>
    <location>
        <position position="1253"/>
    </location>
</feature>
<feature type="mutagenesis site" description="No effect on interaction with KLHL22." evidence="15">
    <original>Y</original>
    <variation>A</variation>
    <location>
        <position position="1256"/>
    </location>
</feature>
<feature type="mutagenesis site" description="Abolished phosphorylation by PIM1; when associated with A-1002." evidence="16">
    <original>S</original>
    <variation>A</variation>
    <location>
        <position position="1530"/>
    </location>
</feature>
<feature type="mutagenesis site" description="No effect on ubiquitination. Loss of ubiquitination; when associated with R-447, R-710, R-1065 and R-1088." evidence="15">
    <original>K</original>
    <variation>R</variation>
    <location>
        <position position="1574"/>
    </location>
</feature>
<feature type="sequence conflict" description="In Ref. 7; CAH18159." evidence="25" ref="7">
    <original>D</original>
    <variation>G</variation>
    <location>
        <position position="1365"/>
    </location>
</feature>
<feature type="sequence conflict" description="In Ref. 7; CAH18159." evidence="25" ref="7">
    <original>L</original>
    <variation>P</variation>
    <location>
        <position position="1430"/>
    </location>
</feature>
<feature type="sequence conflict" description="In Ref. 7; CAH18159." evidence="25" ref="7">
    <original>S</original>
    <variation>G</variation>
    <location>
        <position position="1561"/>
    </location>
</feature>
<feature type="strand" evidence="33">
    <location>
        <begin position="7"/>
        <end position="12"/>
    </location>
</feature>
<feature type="strand" evidence="33">
    <location>
        <begin position="21"/>
        <end position="25"/>
    </location>
</feature>
<feature type="turn" evidence="33">
    <location>
        <begin position="27"/>
        <end position="29"/>
    </location>
</feature>
<feature type="strand" evidence="33">
    <location>
        <begin position="38"/>
        <end position="42"/>
    </location>
</feature>
<feature type="strand" evidence="33">
    <location>
        <begin position="51"/>
        <end position="54"/>
    </location>
</feature>
<feature type="strand" evidence="33">
    <location>
        <begin position="66"/>
        <end position="70"/>
    </location>
</feature>
<feature type="helix" evidence="33">
    <location>
        <begin position="71"/>
        <end position="76"/>
    </location>
</feature>
<feature type="strand" evidence="33">
    <location>
        <begin position="84"/>
        <end position="90"/>
    </location>
</feature>
<feature type="turn" evidence="33">
    <location>
        <begin position="92"/>
        <end position="94"/>
    </location>
</feature>
<feature type="strand" evidence="33">
    <location>
        <begin position="98"/>
        <end position="104"/>
    </location>
</feature>
<feature type="helix" evidence="33">
    <location>
        <begin position="111"/>
        <end position="120"/>
    </location>
</feature>
<feature type="strand" evidence="33">
    <location>
        <begin position="131"/>
        <end position="134"/>
    </location>
</feature>
<feature type="strand" evidence="33">
    <location>
        <begin position="137"/>
        <end position="152"/>
    </location>
</feature>
<feature type="strand" evidence="33">
    <location>
        <begin position="161"/>
        <end position="176"/>
    </location>
</feature>
<feature type="helix" evidence="33">
    <location>
        <begin position="179"/>
        <end position="182"/>
    </location>
</feature>
<feature type="helix" evidence="33">
    <location>
        <begin position="191"/>
        <end position="210"/>
    </location>
</feature>
<feature type="strand" evidence="33">
    <location>
        <begin position="217"/>
        <end position="226"/>
    </location>
</feature>
<feature type="strand" evidence="33">
    <location>
        <begin position="229"/>
        <end position="231"/>
    </location>
</feature>
<feature type="strand" evidence="33">
    <location>
        <begin position="242"/>
        <end position="244"/>
    </location>
</feature>
<feature type="strand" evidence="33">
    <location>
        <begin position="250"/>
        <end position="261"/>
    </location>
</feature>
<feature type="helix" evidence="33">
    <location>
        <begin position="267"/>
        <end position="269"/>
    </location>
</feature>
<feature type="helix" evidence="33">
    <location>
        <begin position="270"/>
        <end position="279"/>
    </location>
</feature>
<feature type="helix" evidence="33">
    <location>
        <begin position="281"/>
        <end position="284"/>
    </location>
</feature>
<feature type="helix" evidence="33">
    <location>
        <begin position="306"/>
        <end position="318"/>
    </location>
</feature>
<feature type="turn" evidence="33">
    <location>
        <begin position="319"/>
        <end position="321"/>
    </location>
</feature>
<feature type="strand" evidence="33">
    <location>
        <begin position="330"/>
        <end position="339"/>
    </location>
</feature>
<feature type="strand" evidence="33">
    <location>
        <begin position="341"/>
        <end position="344"/>
    </location>
</feature>
<feature type="helix" evidence="33">
    <location>
        <begin position="347"/>
        <end position="359"/>
    </location>
</feature>
<feature type="strand" evidence="33">
    <location>
        <begin position="363"/>
        <end position="369"/>
    </location>
</feature>
<feature type="strand" evidence="33">
    <location>
        <begin position="377"/>
        <end position="381"/>
    </location>
</feature>
<feature type="turn" evidence="33">
    <location>
        <begin position="462"/>
        <end position="467"/>
    </location>
</feature>
<feature type="helix" evidence="33">
    <location>
        <begin position="629"/>
        <end position="638"/>
    </location>
</feature>
<feature type="helix" evidence="33">
    <location>
        <begin position="659"/>
        <end position="669"/>
    </location>
</feature>
<feature type="helix" evidence="33">
    <location>
        <begin position="744"/>
        <end position="748"/>
    </location>
</feature>
<feature type="strand" evidence="33">
    <location>
        <begin position="755"/>
        <end position="757"/>
    </location>
</feature>
<feature type="helix" evidence="33">
    <location>
        <begin position="763"/>
        <end position="768"/>
    </location>
</feature>
<feature type="strand" evidence="33">
    <location>
        <begin position="769"/>
        <end position="777"/>
    </location>
</feature>
<feature type="turn" evidence="33">
    <location>
        <begin position="779"/>
        <end position="781"/>
    </location>
</feature>
<feature type="helix" evidence="33">
    <location>
        <begin position="795"/>
        <end position="809"/>
    </location>
</feature>
<feature type="strand" evidence="33">
    <location>
        <begin position="812"/>
        <end position="814"/>
    </location>
</feature>
<feature type="strand" evidence="33">
    <location>
        <begin position="851"/>
        <end position="856"/>
    </location>
</feature>
<feature type="strand" evidence="33">
    <location>
        <begin position="859"/>
        <end position="865"/>
    </location>
</feature>
<feature type="strand" evidence="33">
    <location>
        <begin position="870"/>
        <end position="879"/>
    </location>
</feature>
<feature type="strand" evidence="33">
    <location>
        <begin position="886"/>
        <end position="893"/>
    </location>
</feature>
<feature type="strand" evidence="33">
    <location>
        <begin position="902"/>
        <end position="908"/>
    </location>
</feature>
<feature type="helix" evidence="33">
    <location>
        <begin position="918"/>
        <end position="926"/>
    </location>
</feature>
<feature type="helix" evidence="33">
    <location>
        <begin position="932"/>
        <end position="935"/>
    </location>
</feature>
<feature type="helix" evidence="33">
    <location>
        <begin position="937"/>
        <end position="939"/>
    </location>
</feature>
<feature type="strand" evidence="33">
    <location>
        <begin position="942"/>
        <end position="950"/>
    </location>
</feature>
<feature type="helix" evidence="33">
    <location>
        <begin position="953"/>
        <end position="961"/>
    </location>
</feature>
<feature type="helix" evidence="33">
    <location>
        <begin position="979"/>
        <end position="993"/>
    </location>
</feature>
<feature type="helix" evidence="33">
    <location>
        <begin position="1178"/>
        <end position="1184"/>
    </location>
</feature>
<feature type="strand" evidence="33">
    <location>
        <begin position="1187"/>
        <end position="1190"/>
    </location>
</feature>
<feature type="strand" evidence="33">
    <location>
        <begin position="1204"/>
        <end position="1206"/>
    </location>
</feature>
<feature type="helix" evidence="33">
    <location>
        <begin position="1207"/>
        <end position="1216"/>
    </location>
</feature>
<feature type="strand" evidence="33">
    <location>
        <begin position="1217"/>
        <end position="1220"/>
    </location>
</feature>
<feature type="helix" evidence="33">
    <location>
        <begin position="1224"/>
        <end position="1236"/>
    </location>
</feature>
<feature type="strand" evidence="33">
    <location>
        <begin position="1239"/>
        <end position="1242"/>
    </location>
</feature>
<feature type="strand" evidence="33">
    <location>
        <begin position="1257"/>
        <end position="1260"/>
    </location>
</feature>
<feature type="turn" evidence="33">
    <location>
        <begin position="1290"/>
        <end position="1292"/>
    </location>
</feature>
<feature type="strand" evidence="33">
    <location>
        <begin position="1296"/>
        <end position="1298"/>
    </location>
</feature>
<feature type="strand" evidence="33">
    <location>
        <begin position="1350"/>
        <end position="1357"/>
    </location>
</feature>
<feature type="strand" evidence="33">
    <location>
        <begin position="1364"/>
        <end position="1366"/>
    </location>
</feature>
<feature type="strand" evidence="33">
    <location>
        <begin position="1369"/>
        <end position="1378"/>
    </location>
</feature>
<feature type="strand" evidence="33">
    <location>
        <begin position="1384"/>
        <end position="1392"/>
    </location>
</feature>
<feature type="helix" evidence="33">
    <location>
        <begin position="1395"/>
        <end position="1411"/>
    </location>
</feature>
<feature type="strand" evidence="33">
    <location>
        <begin position="1414"/>
        <end position="1419"/>
    </location>
</feature>
<feature type="strand" evidence="33">
    <location>
        <begin position="1429"/>
        <end position="1431"/>
    </location>
</feature>
<feature type="strand" evidence="33">
    <location>
        <begin position="1439"/>
        <end position="1442"/>
    </location>
</feature>
<feature type="turn" evidence="33">
    <location>
        <begin position="1456"/>
        <end position="1459"/>
    </location>
</feature>
<feature type="helix" evidence="33">
    <location>
        <begin position="1465"/>
        <end position="1479"/>
    </location>
</feature>
<feature type="strand" evidence="33">
    <location>
        <begin position="1482"/>
        <end position="1485"/>
    </location>
</feature>
<feature type="strand" evidence="33">
    <location>
        <begin position="1501"/>
        <end position="1504"/>
    </location>
</feature>
<feature type="strand" evidence="33">
    <location>
        <begin position="1509"/>
        <end position="1512"/>
    </location>
</feature>
<feature type="strand" evidence="33">
    <location>
        <begin position="1545"/>
        <end position="1550"/>
    </location>
</feature>
<feature type="helix" evidence="33">
    <location>
        <begin position="1568"/>
        <end position="1580"/>
    </location>
</feature>
<feature type="helix" evidence="33">
    <location>
        <begin position="1583"/>
        <end position="1585"/>
    </location>
</feature>
<feature type="helix" evidence="33">
    <location>
        <begin position="1586"/>
        <end position="1595"/>
    </location>
</feature>
<keyword id="KW-0002">3D-structure</keyword>
<keyword id="KW-0025">Alternative splicing</keyword>
<keyword id="KW-0963">Cytoplasm</keyword>
<keyword id="KW-0225">Disease variant</keyword>
<keyword id="KW-0887">Epilepsy</keyword>
<keyword id="KW-0343">GTPase activation</keyword>
<keyword id="KW-0991">Intellectual disability</keyword>
<keyword id="KW-0458">Lysosome</keyword>
<keyword id="KW-0472">Membrane</keyword>
<keyword id="KW-0597">Phosphoprotein</keyword>
<keyword id="KW-1267">Proteomics identification</keyword>
<keyword id="KW-1185">Reference proteome</keyword>
<keyword id="KW-0832">Ubl conjugation</keyword>